<organism>
    <name type="scientific">Hepatitis C virus genotype 6h (isolate VN004)</name>
    <name type="common">HCV</name>
    <dbReference type="NCBI Taxonomy" id="356424"/>
    <lineage>
        <taxon>Viruses</taxon>
        <taxon>Riboviria</taxon>
        <taxon>Orthornavirae</taxon>
        <taxon>Kitrinoviricota</taxon>
        <taxon>Flasuviricetes</taxon>
        <taxon>Amarillovirales</taxon>
        <taxon>Flaviviridae</taxon>
        <taxon>Hepacivirus</taxon>
        <taxon>Hepacivirus hominis</taxon>
    </lineage>
</organism>
<organismHost>
    <name type="scientific">Homo sapiens</name>
    <name type="common">Human</name>
    <dbReference type="NCBI Taxonomy" id="9606"/>
</organismHost>
<accession>O92532</accession>
<dbReference type="EC" id="3.4.22.-" evidence="4"/>
<dbReference type="EC" id="3.4.21.98" evidence="6"/>
<dbReference type="EC" id="3.6.1.15" evidence="6"/>
<dbReference type="EC" id="3.6.4.13" evidence="6"/>
<dbReference type="EC" id="2.7.7.48" evidence="6"/>
<dbReference type="EMBL" id="D84265">
    <property type="protein sequence ID" value="BAA32667.1"/>
    <property type="molecule type" value="Genomic_RNA"/>
</dbReference>
<dbReference type="SMR" id="O92532"/>
<dbReference type="MEROPS" id="C18.001"/>
<dbReference type="euHCVdb" id="D84265"/>
<dbReference type="Proteomes" id="UP000008104">
    <property type="component" value="Genome"/>
</dbReference>
<dbReference type="GO" id="GO:0044167">
    <property type="term" value="C:host cell endoplasmic reticulum membrane"/>
    <property type="evidence" value="ECO:0007669"/>
    <property type="project" value="UniProtKB-SubCell"/>
</dbReference>
<dbReference type="GO" id="GO:0044186">
    <property type="term" value="C:host cell lipid droplet"/>
    <property type="evidence" value="ECO:0007669"/>
    <property type="project" value="UniProtKB-SubCell"/>
</dbReference>
<dbReference type="GO" id="GO:0044191">
    <property type="term" value="C:host cell mitochondrial membrane"/>
    <property type="evidence" value="ECO:0007669"/>
    <property type="project" value="UniProtKB-SubCell"/>
</dbReference>
<dbReference type="GO" id="GO:0042025">
    <property type="term" value="C:host cell nucleus"/>
    <property type="evidence" value="ECO:0007669"/>
    <property type="project" value="UniProtKB-SubCell"/>
</dbReference>
<dbReference type="GO" id="GO:0044220">
    <property type="term" value="C:host cell perinuclear region of cytoplasm"/>
    <property type="evidence" value="ECO:0007669"/>
    <property type="project" value="UniProtKB-SubCell"/>
</dbReference>
<dbReference type="GO" id="GO:0020002">
    <property type="term" value="C:host cell plasma membrane"/>
    <property type="evidence" value="ECO:0007669"/>
    <property type="project" value="UniProtKB-SubCell"/>
</dbReference>
<dbReference type="GO" id="GO:0016020">
    <property type="term" value="C:membrane"/>
    <property type="evidence" value="ECO:0007669"/>
    <property type="project" value="UniProtKB-KW"/>
</dbReference>
<dbReference type="GO" id="GO:1990904">
    <property type="term" value="C:ribonucleoprotein complex"/>
    <property type="evidence" value="ECO:0007669"/>
    <property type="project" value="UniProtKB-KW"/>
</dbReference>
<dbReference type="GO" id="GO:0019031">
    <property type="term" value="C:viral envelope"/>
    <property type="evidence" value="ECO:0007669"/>
    <property type="project" value="UniProtKB-KW"/>
</dbReference>
<dbReference type="GO" id="GO:0019013">
    <property type="term" value="C:viral nucleocapsid"/>
    <property type="evidence" value="ECO:0007669"/>
    <property type="project" value="UniProtKB-KW"/>
</dbReference>
<dbReference type="GO" id="GO:0055036">
    <property type="term" value="C:virion membrane"/>
    <property type="evidence" value="ECO:0007669"/>
    <property type="project" value="UniProtKB-SubCell"/>
</dbReference>
<dbReference type="GO" id="GO:0005524">
    <property type="term" value="F:ATP binding"/>
    <property type="evidence" value="ECO:0007669"/>
    <property type="project" value="UniProtKB-KW"/>
</dbReference>
<dbReference type="GO" id="GO:0016887">
    <property type="term" value="F:ATP hydrolysis activity"/>
    <property type="evidence" value="ECO:0007669"/>
    <property type="project" value="RHEA"/>
</dbReference>
<dbReference type="GO" id="GO:0015267">
    <property type="term" value="F:channel activity"/>
    <property type="evidence" value="ECO:0007669"/>
    <property type="project" value="UniProtKB-KW"/>
</dbReference>
<dbReference type="GO" id="GO:0004197">
    <property type="term" value="F:cysteine-type endopeptidase activity"/>
    <property type="evidence" value="ECO:0007669"/>
    <property type="project" value="InterPro"/>
</dbReference>
<dbReference type="GO" id="GO:0003723">
    <property type="term" value="F:RNA binding"/>
    <property type="evidence" value="ECO:0007669"/>
    <property type="project" value="UniProtKB-KW"/>
</dbReference>
<dbReference type="GO" id="GO:0003724">
    <property type="term" value="F:RNA helicase activity"/>
    <property type="evidence" value="ECO:0007669"/>
    <property type="project" value="UniProtKB-EC"/>
</dbReference>
<dbReference type="GO" id="GO:0003968">
    <property type="term" value="F:RNA-directed RNA polymerase activity"/>
    <property type="evidence" value="ECO:0007669"/>
    <property type="project" value="UniProtKB-KW"/>
</dbReference>
<dbReference type="GO" id="GO:0004252">
    <property type="term" value="F:serine-type endopeptidase activity"/>
    <property type="evidence" value="ECO:0007669"/>
    <property type="project" value="InterPro"/>
</dbReference>
<dbReference type="GO" id="GO:0017124">
    <property type="term" value="F:SH3 domain binding"/>
    <property type="evidence" value="ECO:0007669"/>
    <property type="project" value="UniProtKB-KW"/>
</dbReference>
<dbReference type="GO" id="GO:0005198">
    <property type="term" value="F:structural molecule activity"/>
    <property type="evidence" value="ECO:0007669"/>
    <property type="project" value="InterPro"/>
</dbReference>
<dbReference type="GO" id="GO:0008270">
    <property type="term" value="F:zinc ion binding"/>
    <property type="evidence" value="ECO:0007669"/>
    <property type="project" value="InterPro"/>
</dbReference>
<dbReference type="GO" id="GO:0075512">
    <property type="term" value="P:clathrin-dependent endocytosis of virus by host cell"/>
    <property type="evidence" value="ECO:0007669"/>
    <property type="project" value="UniProtKB-KW"/>
</dbReference>
<dbReference type="GO" id="GO:0039654">
    <property type="term" value="P:fusion of virus membrane with host endosome membrane"/>
    <property type="evidence" value="ECO:0007669"/>
    <property type="project" value="UniProtKB-KW"/>
</dbReference>
<dbReference type="GO" id="GO:0034220">
    <property type="term" value="P:monoatomic ion transmembrane transport"/>
    <property type="evidence" value="ECO:0007669"/>
    <property type="project" value="UniProtKB-KW"/>
</dbReference>
<dbReference type="GO" id="GO:0006508">
    <property type="term" value="P:proteolysis"/>
    <property type="evidence" value="ECO:0007669"/>
    <property type="project" value="UniProtKB-KW"/>
</dbReference>
<dbReference type="GO" id="GO:0039520">
    <property type="term" value="P:symbiont-mediated activation of host autophagy"/>
    <property type="evidence" value="ECO:0007669"/>
    <property type="project" value="UniProtKB-KW"/>
</dbReference>
<dbReference type="GO" id="GO:0039645">
    <property type="term" value="P:symbiont-mediated perturbation of host cell cycle G1/S transition checkpoint"/>
    <property type="evidence" value="ECO:0007669"/>
    <property type="project" value="UniProtKB-KW"/>
</dbReference>
<dbReference type="GO" id="GO:0039545">
    <property type="term" value="P:symbiont-mediated suppression of host cytoplasmic pattern recognition receptor signaling pathway via inhibition of MAVS activity"/>
    <property type="evidence" value="ECO:0007669"/>
    <property type="project" value="UniProtKB-KW"/>
</dbReference>
<dbReference type="GO" id="GO:0039563">
    <property type="term" value="P:symbiont-mediated suppression of host JAK-STAT cascade via inhibition of STAT1 activity"/>
    <property type="evidence" value="ECO:0007669"/>
    <property type="project" value="UniProtKB-KW"/>
</dbReference>
<dbReference type="GO" id="GO:0039527">
    <property type="term" value="P:symbiont-mediated suppression of host TRAF-mediated signal transduction"/>
    <property type="evidence" value="ECO:0007669"/>
    <property type="project" value="UniProtKB-KW"/>
</dbReference>
<dbReference type="GO" id="GO:0039502">
    <property type="term" value="P:symbiont-mediated suppression of host type I interferon-mediated signaling pathway"/>
    <property type="evidence" value="ECO:0007669"/>
    <property type="project" value="UniProtKB-KW"/>
</dbReference>
<dbReference type="GO" id="GO:0019087">
    <property type="term" value="P:symbiont-mediated transformation of host cell"/>
    <property type="evidence" value="ECO:0007669"/>
    <property type="project" value="InterPro"/>
</dbReference>
<dbReference type="GO" id="GO:0039694">
    <property type="term" value="P:viral RNA genome replication"/>
    <property type="evidence" value="ECO:0007669"/>
    <property type="project" value="InterPro"/>
</dbReference>
<dbReference type="GO" id="GO:0019062">
    <property type="term" value="P:virion attachment to host cell"/>
    <property type="evidence" value="ECO:0007669"/>
    <property type="project" value="UniProtKB-KW"/>
</dbReference>
<dbReference type="CDD" id="cd20903">
    <property type="entry name" value="HCV_p7"/>
    <property type="match status" value="1"/>
</dbReference>
<dbReference type="CDD" id="cd23202">
    <property type="entry name" value="Hepacivirus_RdRp"/>
    <property type="match status" value="1"/>
</dbReference>
<dbReference type="FunFam" id="2.20.25.220:FF:000001">
    <property type="entry name" value="Genome polyprotein"/>
    <property type="match status" value="1"/>
</dbReference>
<dbReference type="FunFam" id="2.40.10.120:FF:000003">
    <property type="entry name" value="Genome polyprotein"/>
    <property type="match status" value="1"/>
</dbReference>
<dbReference type="FunFam" id="3.30.160.890:FF:000001">
    <property type="entry name" value="Genome polyprotein"/>
    <property type="match status" value="1"/>
</dbReference>
<dbReference type="FunFam" id="3.30.70.270:FF:000015">
    <property type="entry name" value="Genome polyprotein"/>
    <property type="match status" value="1"/>
</dbReference>
<dbReference type="FunFam" id="3.40.50.300:FF:000557">
    <property type="entry name" value="Genome polyprotein"/>
    <property type="match status" value="1"/>
</dbReference>
<dbReference type="FunFam" id="3.40.50.300:FF:000717">
    <property type="entry name" value="Genome polyprotein"/>
    <property type="match status" value="1"/>
</dbReference>
<dbReference type="Gene3D" id="2.40.10.120">
    <property type="match status" value="1"/>
</dbReference>
<dbReference type="Gene3D" id="3.30.70.270">
    <property type="match status" value="2"/>
</dbReference>
<dbReference type="Gene3D" id="6.10.250.1610">
    <property type="match status" value="1"/>
</dbReference>
<dbReference type="Gene3D" id="6.10.250.1750">
    <property type="match status" value="1"/>
</dbReference>
<dbReference type="Gene3D" id="6.10.250.2920">
    <property type="match status" value="1"/>
</dbReference>
<dbReference type="Gene3D" id="2.20.25.210">
    <property type="entry name" value="Hepatitis C NS5A, domain 1B"/>
    <property type="match status" value="1"/>
</dbReference>
<dbReference type="Gene3D" id="4.10.710.10">
    <property type="entry name" value="Hepatitis C Virus Capsid Protein, Chain A"/>
    <property type="match status" value="1"/>
</dbReference>
<dbReference type="Gene3D" id="3.30.160.890">
    <property type="entry name" value="Hepatitis C virus envelope glycoprotein E1, chain C"/>
    <property type="match status" value="1"/>
</dbReference>
<dbReference type="Gene3D" id="2.30.30.710">
    <property type="entry name" value="Hepatitis C virus non-structural protein NS2, C-terminal domain"/>
    <property type="match status" value="1"/>
</dbReference>
<dbReference type="Gene3D" id="1.20.1280.150">
    <property type="entry name" value="Hepatitis C virus non-structural protein NS2, N-terminal domain"/>
    <property type="match status" value="1"/>
</dbReference>
<dbReference type="Gene3D" id="2.20.25.220">
    <property type="entry name" value="Hepatitis C virus NS5A, 1B domain"/>
    <property type="match status" value="1"/>
</dbReference>
<dbReference type="Gene3D" id="3.40.50.300">
    <property type="entry name" value="P-loop containing nucleotide triphosphate hydrolases"/>
    <property type="match status" value="2"/>
</dbReference>
<dbReference type="Gene3D" id="1.10.820.10">
    <property type="entry name" value="RNA Helicase Chain A , domain 3"/>
    <property type="match status" value="1"/>
</dbReference>
<dbReference type="Gene3D" id="2.40.10.10">
    <property type="entry name" value="Trypsin-like serine proteases"/>
    <property type="match status" value="1"/>
</dbReference>
<dbReference type="InterPro" id="IPR043502">
    <property type="entry name" value="DNA/RNA_pol_sf"/>
</dbReference>
<dbReference type="InterPro" id="IPR011492">
    <property type="entry name" value="Flavi_DEAD"/>
</dbReference>
<dbReference type="InterPro" id="IPR002521">
    <property type="entry name" value="HCV_Core_C"/>
</dbReference>
<dbReference type="InterPro" id="IPR044896">
    <property type="entry name" value="HCV_core_chain_A"/>
</dbReference>
<dbReference type="InterPro" id="IPR002522">
    <property type="entry name" value="HCV_core_N"/>
</dbReference>
<dbReference type="InterPro" id="IPR002519">
    <property type="entry name" value="HCV_Env"/>
</dbReference>
<dbReference type="InterPro" id="IPR002531">
    <property type="entry name" value="HCV_NS1"/>
</dbReference>
<dbReference type="InterPro" id="IPR002518">
    <property type="entry name" value="HCV_NS2"/>
</dbReference>
<dbReference type="InterPro" id="IPR042205">
    <property type="entry name" value="HCV_NS2_C"/>
</dbReference>
<dbReference type="InterPro" id="IPR042209">
    <property type="entry name" value="HCV_NS2_N"/>
</dbReference>
<dbReference type="InterPro" id="IPR000745">
    <property type="entry name" value="HCV_NS4a"/>
</dbReference>
<dbReference type="InterPro" id="IPR001490">
    <property type="entry name" value="HCV_NS4b"/>
</dbReference>
<dbReference type="InterPro" id="IPR002868">
    <property type="entry name" value="HCV_NS5a"/>
</dbReference>
<dbReference type="InterPro" id="IPR013192">
    <property type="entry name" value="HCV_NS5A_1a"/>
</dbReference>
<dbReference type="InterPro" id="IPR013193">
    <property type="entry name" value="HCV_NS5a_1B_dom"/>
</dbReference>
<dbReference type="InterPro" id="IPR038568">
    <property type="entry name" value="HCV_NS5A_1B_sf"/>
</dbReference>
<dbReference type="InterPro" id="IPR024350">
    <property type="entry name" value="HCV_NS5a_C"/>
</dbReference>
<dbReference type="InterPro" id="IPR049913">
    <property type="entry name" value="HCV_p7"/>
</dbReference>
<dbReference type="InterPro" id="IPR014001">
    <property type="entry name" value="Helicase_ATP-bd"/>
</dbReference>
<dbReference type="InterPro" id="IPR001650">
    <property type="entry name" value="Helicase_C-like"/>
</dbReference>
<dbReference type="InterPro" id="IPR004109">
    <property type="entry name" value="HepC_NS3_protease"/>
</dbReference>
<dbReference type="InterPro" id="IPR054175">
    <property type="entry name" value="NS3_helicase_C"/>
</dbReference>
<dbReference type="InterPro" id="IPR038170">
    <property type="entry name" value="NS5A_1a_sf"/>
</dbReference>
<dbReference type="InterPro" id="IPR027417">
    <property type="entry name" value="P-loop_NTPase"/>
</dbReference>
<dbReference type="InterPro" id="IPR009003">
    <property type="entry name" value="Peptidase_S1_PA"/>
</dbReference>
<dbReference type="InterPro" id="IPR043504">
    <property type="entry name" value="Peptidase_S1_PA_chymotrypsin"/>
</dbReference>
<dbReference type="InterPro" id="IPR043128">
    <property type="entry name" value="Rev_trsase/Diguanyl_cyclase"/>
</dbReference>
<dbReference type="InterPro" id="IPR007094">
    <property type="entry name" value="RNA-dir_pol_PSvirus"/>
</dbReference>
<dbReference type="InterPro" id="IPR002166">
    <property type="entry name" value="RNA_pol_HCV"/>
</dbReference>
<dbReference type="Pfam" id="PF07652">
    <property type="entry name" value="Flavi_DEAD"/>
    <property type="match status" value="1"/>
</dbReference>
<dbReference type="Pfam" id="PF01543">
    <property type="entry name" value="HCV_capsid"/>
    <property type="match status" value="1"/>
</dbReference>
<dbReference type="Pfam" id="PF01542">
    <property type="entry name" value="HCV_core"/>
    <property type="match status" value="1"/>
</dbReference>
<dbReference type="Pfam" id="PF01539">
    <property type="entry name" value="HCV_env"/>
    <property type="match status" value="1"/>
</dbReference>
<dbReference type="Pfam" id="PF01560">
    <property type="entry name" value="HCV_NS1"/>
    <property type="match status" value="1"/>
</dbReference>
<dbReference type="Pfam" id="PF01538">
    <property type="entry name" value="HCV_NS2"/>
    <property type="match status" value="1"/>
</dbReference>
<dbReference type="Pfam" id="PF01006">
    <property type="entry name" value="HCV_NS4a"/>
    <property type="match status" value="1"/>
</dbReference>
<dbReference type="Pfam" id="PF01001">
    <property type="entry name" value="HCV_NS4b"/>
    <property type="match status" value="1"/>
</dbReference>
<dbReference type="Pfam" id="PF01506">
    <property type="entry name" value="HCV_NS5a"/>
    <property type="match status" value="1"/>
</dbReference>
<dbReference type="Pfam" id="PF08300">
    <property type="entry name" value="HCV_NS5a_1a"/>
    <property type="match status" value="1"/>
</dbReference>
<dbReference type="Pfam" id="PF08301">
    <property type="entry name" value="HCV_NS5a_1b"/>
    <property type="match status" value="1"/>
</dbReference>
<dbReference type="Pfam" id="PF12941">
    <property type="entry name" value="HCV_NS5a_C"/>
    <property type="match status" value="1"/>
</dbReference>
<dbReference type="Pfam" id="PF22027">
    <property type="entry name" value="NS3_helicase_C"/>
    <property type="match status" value="1"/>
</dbReference>
<dbReference type="Pfam" id="PF02907">
    <property type="entry name" value="Peptidase_S29"/>
    <property type="match status" value="1"/>
</dbReference>
<dbReference type="Pfam" id="PF00998">
    <property type="entry name" value="RdRP_3"/>
    <property type="match status" value="1"/>
</dbReference>
<dbReference type="SMART" id="SM00487">
    <property type="entry name" value="DEXDc"/>
    <property type="match status" value="1"/>
</dbReference>
<dbReference type="SUPFAM" id="SSF56672">
    <property type="entry name" value="DNA/RNA polymerases"/>
    <property type="match status" value="1"/>
</dbReference>
<dbReference type="SUPFAM" id="SSF52540">
    <property type="entry name" value="P-loop containing nucleoside triphosphate hydrolases"/>
    <property type="match status" value="2"/>
</dbReference>
<dbReference type="SUPFAM" id="SSF50494">
    <property type="entry name" value="Trypsin-like serine proteases"/>
    <property type="match status" value="1"/>
</dbReference>
<dbReference type="PROSITE" id="PS51693">
    <property type="entry name" value="HCV_NS2_PRO"/>
    <property type="match status" value="1"/>
</dbReference>
<dbReference type="PROSITE" id="PS51192">
    <property type="entry name" value="HELICASE_ATP_BIND_1"/>
    <property type="match status" value="1"/>
</dbReference>
<dbReference type="PROSITE" id="PS51194">
    <property type="entry name" value="HELICASE_CTER"/>
    <property type="match status" value="1"/>
</dbReference>
<dbReference type="PROSITE" id="PS51822">
    <property type="entry name" value="HV_PV_NS3_PRO"/>
    <property type="match status" value="1"/>
</dbReference>
<dbReference type="PROSITE" id="PS50507">
    <property type="entry name" value="RDRP_SSRNA_POS"/>
    <property type="match status" value="1"/>
</dbReference>
<sequence>MSTLPKPQRKTKRNTNRRPMDVKFPGGGQIVGGVYLLPRRGPRLGVRATRKTSERSQPRGRRQPIPKARQPIGRSWGQPGYPWPLYGNEGCGWAGWLLSPRGSRPNWGPNDPRRRSRNLGKVIDTLTCGLADLMGYIPVLGGPLGGVAAALAHGVRAIEDGVNYATGNLPGCSFSIFLLALLSCLTTPASAIQVRNASGIYHLTNDCSNNSIVFEAETIILHLPGCVPCIKVGNGSRCWLSVSPTLAVPNSSVPIHGFRRHVDLLVGAAAFCSAMYIGDLCGSVFLVGQLFTFRPKHHQVTQDCNCSIYAGHITGHRMAWDMMLNWSPTVSYVVSSALRVPQLLLEVITGAHWGVLGALLYFSMVANWAKVIAVLFLFAGADATTYTGSAVSSTTGAFVSLFSPGPTQNLQLVNSNGSWHINRTALNCNDSLQTGFIAGLFARYKFNSTGCPERMSKCRPLHSFEQGWGPISYVNISGSSEDKPYCWHYAPRPCGIVPARNVCGPVYCFTPSPVVVGTTDQRGIPTYTWGENVSDVFLLHSARPPLGAWFGCTWMNSSGFVKTCGAPPCRIKPTINETDLVCPTDCFRKHPDASFVKCGSGPWLTPRCMVDYPYRLWHYPCTVNFTIHKVRVFVGGVEHRFNAACNWTRGDRCELDDRDRFEMSPLLFSTTQLAILPCSFTTMPALSTGLIHLHQNIVDIQYLYGVSTAVVSWAMKWEYVVLAFLVLADARVCACLWLMFLVGQAEAALENVIVLNAASAASCQGLLWGLIFICCAWHVRGRAVPVTTYALLQLWPLLLLILALPRRAYAFDSEQAASAGLLVLGLITIFTLTPAYKQLLISMLWWIQYFIALTEAQLHQWVPSLLVRGGRDAVILLACLFHPQLGFEVTKILLALLGPLYLLQYSLLKTPYFVRAHILLRACMFFRGMARGRYAQAILLRIGAWTGTYIYDHLAPLSDWACDGLRDLAVAVEPVVFSPMEKKVITWGADTAACGDIIAGLPVAARRGNLLFLGPADDVKGKGWRLLAPITAYAQQTRGIVGTIVTSLTGRDKNEVEGEIQVVSTATQSFLATAVNGVLWTVYYGAGSKTLAGPKGPVCQMYTNVDQDLVGWPAPAGARSLTPCSCGSSDLYLVTRNADVIPARRRGDNRAALLSPRPISTLKGSSGGPMLCPSGHVAGIFRAAVCTRGVAKSLDFAPVESMQSSQRSPSFSDNTSPPAVPQTYQVGYLHAPTGSGKSTKVPAAYAAQGYKVLVLNPSVAATLGFGSYMSTSHGIDPNIRTGVRTITTGGAITYSTYGKFLADGGCSGGAYDVIICDECHSTDPTTVSGIGTVLDQAETSGVRLTVLATATPPGSVTVPHPNITESALPTTGEIPFYGKAVPLEYIKGGRHLIFCHPKKKCDELAKQLVSLGLNAVAFYRGVDVSVIPTSGDVVVCATDALMTGYTGDFDSVIDCNVTVTQVVDFSLDPTFTIETTTVPQDAVSRSQRRGRTGRGKHGVYRYVSQGERPSGMFDSVILCEAYDTGCAWYELTPAETTVRLRAYLNTPGLPVCQDHLEFWEGVFTGLTHIDAHFLSQTKQAEENFAYLVAYQATVCARAKAPPPSWDTMWKCLIRLKPMLTGPTPLLYRLGPVQNEVVTTHPITKYIMTCMSADLEVITSTWVLVGGVVAALAAYCLSVGCVVICGRISTSGKPVLIPDREVLYQQFDEMEECSRHIPYLAEGHLIAEQFKQKVLGLIQSTSKQAEELKPAVHAAWPKLEQFWQKQLWNFVSGIQYLAGLSTLPGNPAIASLMSFSASLTSPLSTHQTLLLNILGGWVASQLANPTASTAFVVSGLAGAAVGSIGLGRVIVDVLAGYGAGVSGALVAFKIMCGETPSAEDMVNLLPALLSPGALVVGVVCAAILRRHAGPSEGATQWMNRLIAFASRGNHVSPTHYVPETDTSRQIMTILSSLTVTSLLRKLHEWINTDWSTPCSSSWLRDIWDWVCEVLSDFKTWLKAKLVPALPGVPFLSCQRGFRGTWRGDGICHTTCPCGSEITGHVKNGTMKISGPRWCSNVSHRTFPINATTTGPSVPIPEPNYTRALWRVSAEEYVEVKRVGDSHFVVGATTDNLKCPCQVPAPEFFTEVDGVRLHRYAPRCKPLLRDEVSFSVGLSSYAVGSQLPCEPEPDVTVVTSMLIDPSHVTAEAAARRLARGSPPSLASSSASQLSAPSLKATCTMHGAHPDAELIEANLLWRQEMGGNITRVESENKVVILDSFDPLVPEFEEREMSVPAECHRPRRPKFPPALPIWATPGYNPPVLETWKSPTYEPPVVHGCALPPSGPPPIPPPRRKKVVQLDSSNVSAALAQLAAKTFETPSSPTTGYGSDQPDHSTESSEHDRDDGVASEAESYSSMPPLEGEPGDPDLSSGSWSTVSEEGDSVVCCSYSYSWTGALVTPCAAEEEKLPINPLSNSLIRHHNLVYSTSSRSAATRQKKVTFDRVQLLDQHYYDTVKEIKLRASHVKAQLLSTEEACDLTPPHSARSKFGYGAKDVRSHASKAINHINSVWADLLEDTQTPIPTTIMAKNEVFCVDASKGGRKSARLIVYPDLGVRVCEKRALFDVTRKLPTAIMGDAYGFQYSPQQRVDRLLKMWRSKKTPMGFSYDTRCFDSTVTERDIRTEQDIYLSCQLDPEARKVIESLTERLYVGGPMYNSKGQLCGQRRCRASGVLPTSMGNTVTCFLKATAACRAAGFTDYDMLVCGDDLVVVTESAGVNEDIANLRAFTEAMTRYSATPGDEPSPTYDLELITSCSSNVSVAHDGDGRRYYYLTRDPVTPLARAAWETARHTPVNSWLGNIIMYAPTIWVRMVLMTHFFQILQAQETLDRALDFDIYGVTYSITPLDLPVIIQRLHGMAAFSLHGYSPDELNRVASCLRKLGAPPLRAWRHRARAVRAKLIAQGGKAAVCGKYLFNWAIKTKLRLTPLRGASALDLSGWFTSGYGGGDVYHSASRARPRFLLLCLLLLSVGVGIFLLPAR</sequence>
<comment type="function">
    <molecule>Mature core protein</molecule>
    <text evidence="3 5 6 7 12 20">Packages viral RNA to form a viral nucleocapsid, and promotes virion budding (Probable). Participates in the viral particle production as a result of its interaction with the non-structural protein 5A (By similarity). Binds RNA and may function as a RNA chaperone to induce the RNA structural rearrangements taking place during virus replication (By similarity). Modulates viral translation initiation by interacting with viral IRES and 40S ribosomal subunit (By similarity). Affects various cell signaling pathways, host immunity and lipid metabolism (Probable). Prevents the establishment of cellular antiviral state by blocking the interferon-alpha/beta (IFN-alpha/beta) and IFN-gamma signaling pathways and by blocking the formation of phosphorylated STAT1 and promoting ubiquitin-mediated proteasome-dependent degradation of STAT1 (By similarity). Activates STAT3 leading to cellular transformation (By similarity). Regulates the activity of cellular genes, including c-myc and c-fos (By similarity). May repress the promoter of p53, and sequester CREB3 and SP110 isoform 3/Sp110b in the cytoplasm (By similarity). Represses cell cycle negative regulating factor CDKN1A, thereby interrupting an important check point of normal cell cycle regulation (By similarity). Targets transcription factors involved in the regulation of inflammatory responses and in the immune response: suppresses TNF-induced NF-kappa-B activation, and activates AP-1 (By similarity). Binds to dendritic cells (DCs) via C1QR1, resulting in down-regulation of T-lymphocytes proliferation (By similarity). Alters lipid metabolism by interacting with hepatocellular proteins involved in lipid accumulation and storage (By similarity). Induces up-regulation of FAS promoter activity, and thereby contributes to the increased triglyceride accumulation in hepatocytes (steatosis) (By similarity).</text>
</comment>
<comment type="function">
    <molecule>Envelope glycoprotein E1</molecule>
    <text evidence="6">Forms a heterodimer with envelope glycoprotein E2, which mediates virus attachment to the host cell, virion internalization through clathrin-dependent endocytosis and fusion with host membrane (By similarity). Fusion with the host cell is most likely mediated by both E1 and E2, through conformational rearrangements of the heterodimer required for fusion rather than a classical class II fusion mechanism (By similarity). E1/E2 heterodimer binds host apolipoproteins such as APOB and ApoE thereby forming a lipo-viro-particle (LVP) (By similarity). APOE associated to the LVP allows the initial virus attachment to cell surface receptors such as the heparan sulfate proteoglycans (HSPGs), syndecan-1 (SDC1), syndecan-1 (SDC2), the low-density lipoprotein receptor (LDLR) and scavenger receptor class B type I (SCARB1) (By similarity). The cholesterol transfer activity of SCARB1 allows E2 exposure and binding of E2 to SCARB1 and the tetraspanin CD81 (By similarity). E1/E2 heterodimer binding on CD81 activates the epithelial growth factor receptor (EGFR) signaling pathway (By similarity). Diffusion of the complex E1-E2-EGFR-SCARB1-CD81 to the cell lateral membrane allows further interaction with Claudin 1 (CLDN1) and occludin (OCLN) to finally trigger HCV entry (By similarity).</text>
</comment>
<comment type="function">
    <molecule>Envelope glycoprotein E2</molecule>
    <text evidence="5 6">Forms a heterodimer with envelope glycoprotein E1, which mediates virus attachment to the host cell, virion internalization through clathrin-dependent endocytosis and fusion with host membrane (By similarity). Fusion with the host cell is most likely mediated by both E1 and E2, through conformational rearrangements of the heterodimer required for fusion rather than a classical class II fusion mechanism (By similarity). The interaction between envelope glycoprotein E2 and host apolipoprotein E/APOE allows the proper assembly, maturation and infectivity of the viral particles (By similarity). This interaction is probably promoted via the up-regulation of cellular autophagy by the virus (By similarity). E1/E2 heterodimer binds host apolipoproteins such as APOB and APOE thereby forming a lipo-viro-particle (LVP) (By similarity). APOE associated to the LVP allows the initial virus attachment to cell surface receptors such as the heparan sulfate proteoglycans (HSPGs), syndecan-1 (SDC1), syndecan-1 (SDC2), the low-density lipoprotein receptor (LDLR) and scavenger receptor class B type I (SCARB1) (By similarity). The cholesterol transfer activity of SCARB1 allows E2 exposure and binding of E2 to SCARB1 and the tetraspanin CD81 (By similarity). E1/E2 heterodimer binding on CD81 activates the epithelial growth factor receptor (EGFR) signaling pathway (By similarity). Diffusion of the complex E1-E2-EGFR-SCARB1-CD81 to the cell lateral membrane allows further interaction with Claudin 1 (CLDN1) and occludin (OCLN) to finally trigger HCV entry (By similarity). Inhibits host EIF2AK2/PKR activation, preventing the establishment of an antiviral state (By similarity). Viral ligand for CD209/DC-SIGN and CLEC4M/DC-SIGNR, which are respectively found on dendritic cells (DCs), and on liver sinusoidal endothelial cells and macrophage-like cells of lymph node sinuses (By similarity). These interactions allow the capture of circulating HCV particles by these cells and subsequent facilitated transmission to permissive cells such as hepatocytes and lymphocyte subpopulations (By similarity). The interaction between E2 and host amino acid transporter complex formed by SLC3A2 and SLC7A5/LAT1 may facilitate viral entry into host cell (By similarity).</text>
</comment>
<comment type="function">
    <molecule>Viroporin p7</molecule>
    <text evidence="6 12 20">Ion channel protein that acts as a viroporin and plays an essential role in the assembly, envelopment and secretion of viral particles (By similarity). Regulates the host cell secretory pathway, which induces the intracellular retention of viral glycoproteins and favors assembly of viral particles (By similarity). Creates a pore in acidic organelles and releases Ca(2+) and H(+) in the cytoplasm of infected cells, leading to a productive viral infection (By similarity). High levels of cytoplasmic Ca(2+) may trigger membrane trafficking and transport of viral ER-associated proteins to viroplasms, sites of viral genome replication (Probable). This ionic imbalance induces the assembly of the inflammasome complex, which triggers the maturation of pro-IL-1beta into IL-1beta through the action of caspase-1 (By similarity). Targets also host mitochondria and induces mitochondrial depolarization (By similarity). In addition of its role as a viroporin, acts as a lipid raft adhesion factor (By similarity).</text>
</comment>
<comment type="function">
    <molecule>Protease NS2</molecule>
    <text evidence="4 6">Cysteine protease required for the proteolytic auto-cleavage between the non-structural proteins NS2 and NS3 (By similarity). The N-terminus of NS3 is required for the function of NS2 protease (active region NS2-3) (By similarity). Promotes the initiation of viral particle assembly by mediating the interaction between structural and non-structural proteins (By similarity).</text>
</comment>
<comment type="function">
    <molecule>Serine protease/helicase NS3</molecule>
    <text evidence="6 13">Displays three enzymatic activities: serine protease with a chymotrypsin-like fold, NTPase and RNA helicase (By similarity). NS3 serine protease, in association with NS4A, is responsible for the cleavages of NS3-NS4A, NS4A-NS4B, NS4B-NS5A and NS5A-NS5B (By similarity). The NS3/NS4A complex prevents phosphorylation of host IRF3, thus preventing the establishment of dsRNA induced antiviral state (By similarity). The NS3/NS4A complex induces host amino acid transporter component SLC3A2, thus contributing to HCV propagation (By similarity). NS3 RNA helicase binds to RNA and unwinds both dsDNA and dsRNA in the 3' to 5' direction, and likely resolves RNA complicated stable secondary structures in the template strand (By similarity). Binds a single ATP and catalyzes the unzipping of a single base pair of dsRNA (By similarity). Inhibits host antiviral proteins TBK1 and IRF3 thereby preventing the establishment of an antiviral state (By similarity). Cleaves host MAVS/CARDIF thereby preventing the establishment of an antiviral state (By similarity). Cleaves host TICAM1/TRIF, thereby disrupting TLR3 signaling and preventing the establishment of an antiviral state (By similarity).</text>
</comment>
<comment type="function">
    <molecule>Non-structural protein 4A</molecule>
    <text evidence="6 13">Peptide cofactor which forms a non-covalent complex with the N-terminal of NS3 serine protease (By similarity). The NS3/NS4A complex prevents phosphorylation of host IRF3, thus preventing the establishment of dsRNA induced antiviral state (By similarity). The NS3/NS4A complex induces host amino acid transporter component SLC3A2, thus contributing to HCV propagation (By similarity).</text>
</comment>
<comment type="function">
    <molecule>Non-structural protein 4B</molecule>
    <text evidence="6">Induces a specific membrane alteration that serves as a scaffold for the virus replication complex (By similarity). This membrane alteration gives rise to the so-called ER-derived membranous web that contains the replication complex (By similarity). NS4B self-interaction contributes to its function in membranous web formation (By similarity). Promotes host TRIF protein degradation in a CASP8-dependent manner thereby inhibiting host TLR3-mediated interferon signaling (By similarity). Disrupts the interaction between STING and TBK1 contributing to the inhibition of interferon signaling (By similarity).</text>
</comment>
<comment type="function">
    <molecule>Non-structural protein 5A</molecule>
    <text evidence="3 5 6 12 13">Phosphorylated protein that is indispensable for viral replication and assembly (By similarity). Both hypo- and hyperphosphorylated states are required for the viral life cycle (By similarity). The hyperphosphorylated form of NS5A is an inhibitor of viral replication (By similarity). Involved in RNA-binding and especially in binding to the viral genome (By similarity). Zinc is essential for RNA-binding (By similarity). Participates in the viral particle production as a result of its interaction with the mature viral core protein (By similarity). Its interaction with host VAPB may target the viral replication complex to vesicles (By similarity). Down-regulates viral IRES translation initiation (By similarity). Mediates interferon resistance, presumably by interacting with and inhibiting host EIF2AK2/PKR (By similarity). Prevents BIN1-induced apoptosis (By similarity). Acts as a transcriptional activator of some host genes important for viral replication when localized in the nucleus (By similarity). Via the interaction with host PACSIN2, modulates lipid droplet formation in order to promote virion assembly (By similarity). Modulates TNFRSF21/DR6 signaling pathway for viral propagation (By similarity).</text>
</comment>
<comment type="function">
    <molecule>RNA-directed RNA polymerase</molecule>
    <text evidence="6">RNA-dependent RNA polymerase that performs primer-template recognition and RNA synthesis during viral replication. Initiates RNA transcription/replication at a flavin adenine dinucleotide (FAD), resulting in a 5'- FAD cap on viral RNAs. In this way, recognition of viral 5' RNA by host pattern recognition receptors can be bypassed, thereby evading activation of antiviral pathways.</text>
</comment>
<comment type="catalytic activity">
    <molecule>Serine protease/helicase NS3</molecule>
    <reaction evidence="6">
        <text>Hydrolysis of four peptide bonds in the viral precursor polyprotein, commonly with Asp or Glu in the P6 position, Cys or Thr in P1 and Ser or Ala in P1'.</text>
        <dbReference type="EC" id="3.4.21.98"/>
    </reaction>
</comment>
<comment type="catalytic activity">
    <molecule>Serine protease/helicase NS3</molecule>
    <reaction evidence="6">
        <text>a ribonucleoside 5'-triphosphate + H2O = a ribonucleoside 5'-diphosphate + phosphate + H(+)</text>
        <dbReference type="Rhea" id="RHEA:23680"/>
        <dbReference type="ChEBI" id="CHEBI:15377"/>
        <dbReference type="ChEBI" id="CHEBI:15378"/>
        <dbReference type="ChEBI" id="CHEBI:43474"/>
        <dbReference type="ChEBI" id="CHEBI:57930"/>
        <dbReference type="ChEBI" id="CHEBI:61557"/>
        <dbReference type="EC" id="3.6.1.15"/>
    </reaction>
</comment>
<comment type="catalytic activity">
    <molecule>Serine protease/helicase NS3</molecule>
    <reaction evidence="6">
        <text>ATP + H2O = ADP + phosphate + H(+)</text>
        <dbReference type="Rhea" id="RHEA:13065"/>
        <dbReference type="ChEBI" id="CHEBI:15377"/>
        <dbReference type="ChEBI" id="CHEBI:15378"/>
        <dbReference type="ChEBI" id="CHEBI:30616"/>
        <dbReference type="ChEBI" id="CHEBI:43474"/>
        <dbReference type="ChEBI" id="CHEBI:456216"/>
        <dbReference type="EC" id="3.6.4.13"/>
    </reaction>
</comment>
<comment type="catalytic activity">
    <molecule>RNA-directed RNA polymerase</molecule>
    <reaction evidence="15">
        <text>RNA(n) + a ribonucleoside 5'-triphosphate = RNA(n+1) + diphosphate</text>
        <dbReference type="Rhea" id="RHEA:21248"/>
        <dbReference type="Rhea" id="RHEA-COMP:14527"/>
        <dbReference type="Rhea" id="RHEA-COMP:17342"/>
        <dbReference type="ChEBI" id="CHEBI:33019"/>
        <dbReference type="ChEBI" id="CHEBI:61557"/>
        <dbReference type="ChEBI" id="CHEBI:140395"/>
        <dbReference type="EC" id="2.7.7.48"/>
    </reaction>
</comment>
<comment type="cofactor">
    <molecule>Protease NS2</molecule>
    <cofactor evidence="4">
        <name>Zn(2+)</name>
        <dbReference type="ChEBI" id="CHEBI:29105"/>
    </cofactor>
    <text evidence="4">Activity of protease NS2 is dependent on zinc ions and completely inhibited by EDTA. This is probably due to the fact that NS2 protease activity needs NS3 N-terminus that binds a zinc atom (active region NS2-3).</text>
</comment>
<comment type="cofactor">
    <molecule>Serine protease/helicase NS3</molecule>
    <cofactor evidence="4">
        <name>Zn(2+)</name>
        <dbReference type="ChEBI" id="CHEBI:29105"/>
    </cofactor>
    <cofactor evidence="13">
        <name>Mg(2+)</name>
        <dbReference type="ChEBI" id="CHEBI:18420"/>
    </cofactor>
    <text evidence="4 13">Binds 1 zinc ion, which has a structural role (By similarity). The magnesium ion is essential for the helicase activity (By similarity).</text>
</comment>
<comment type="cofactor">
    <molecule>RNA-directed RNA polymerase</molecule>
    <cofactor evidence="4">
        <name>Mg(2+)</name>
        <dbReference type="ChEBI" id="CHEBI:18420"/>
    </cofactor>
    <text evidence="4">Binds 2 magnesium ion that constitute a dinuclear catalytic metal center.</text>
</comment>
<comment type="activity regulation">
    <molecule>Viroporin p7</molecule>
    <text evidence="3 6">Inhibited by the antiviral drug hexamethylene amiloride (By similarity). Inhibition by amantadine appears to be genotype-dependent (By similarity). Also inhibited by long-alkyl-chain iminosugar derivatives (By similarity).</text>
</comment>
<comment type="activity regulation">
    <molecule>RNA-directed RNA polymerase</molecule>
    <text evidence="6">Activity is up-regulated by PRK2/PKN2-mediated phosphorylation.</text>
</comment>
<comment type="subunit">
    <molecule>Mature core protein</molecule>
    <text evidence="3 5 6 7 9 10 12">Homooligomer (By similarity). Interacts with E1 (via C-terminus) (By similarity). Interacts with the non-structural protein 5A (By similarity). Interacts (via N-terminus) with host STAT1 (via SH2 domain); this interaction results in decreased STAT1 phosphorylation and ubiquitin-mediated proteasome-dependent STAT1 degradation, leading to decreased IFN-stimulated gene transcription (By similarity). Interacts with host STAT3; this interaction constitutively activates STAT3 (By similarity). Interacts with host LTBR receptor (By similarity). Interacts with host TNFRSF1A receptor and possibly induces apoptosis (By similarity). Interacts with host HNRPK (By similarity). Interacts with host YWHAE (By similarity). Interacts with host UBE3A/E6AP (By similarity). Interacts with host DDX3X (By similarity). Interacts with host APOA2 (By similarity). Interacts with host RXRA protein (By similarity). Interacts with host SP110 isoform 3/Sp110b; this interaction sequesters the transcriptional corepressor SP110 away from the nucleus (By similarity). Interacts with host CREB3 nuclear transcription protein; this interaction triggers cell transformation (By similarity). Interacts with host ACY3 (By similarity). Interacts with host C1QR1 (By similarity). Interacts with host RBM24; this interaction, which enhances the interaction of the mature core protein with 5'-UTR, may inhibit viral translation and favor replication (By similarity). Interacts with host EIF2AK2/PKR; this interaction induces the autophosphorylation of EIF2AK2 (By similarity). Part of the viral assembly initiation complex composed of NS2, E1, E2, NS3, NS4A, NS5A and the mature core protein (By similarity).</text>
</comment>
<comment type="subunit">
    <molecule>Envelope glycoprotein E1</molecule>
    <text evidence="6 12">Forms a heterodimer with envelope glycoprotein E2 (By similarity). Interacts with mature core protein (By similarity). Interacts with protease NS2 (By similarity). The heterodimer E1/E2 interacts with host CLDN1; this interaction plays a role in viral entry into host cell (By similarity). Interacts with host SPSB2 (via C-terminus) (By similarity). Part of the viral assembly initiation complex composed of NS2, E1, E2, NS3, NS4A, NS5A and the mature core protein (By similarity). Interacts with host NEURL3; this interaction prevents E1 binding to glycoprotein E2 (By similarity).</text>
</comment>
<comment type="subunit">
    <molecule>Envelope glycoprotein E2</molecule>
    <text evidence="6 12 13">Forms a heterodimer with envelope glycoprotein E1 (By similarity). Interacts with host CD81 and SCARB1 receptors; these interactions play a role in viral entry into host cell (By similarity). Interacts with host EIF2AK2/PKR; this interaction inhibits EIF2AK2 and probably allows the virus to evade the innate immune response (By similarity). Interacts with host CD209/DC-SIGN and CLEC4M/DC-SIGNR (By similarity). Interact with host SPCS1; this interaction is essential for viral particle assembly (By similarity). Interacts with protease NS2 (By similarity). The heterodimer E1/E2 interacts with host CLDN1; this interaction plays a role in viral entry into host cell (By similarity). Part of the viral assembly initiation complex composed of NS2, E1, E2, NS3, NS4A, NS5A and the mature core protein (By similarity). Interacts with host SLC3A2/4F2hc; the interaction may facilitate viral entry into host cell (By similarity). Interacts with human PLSCR1 (By similarity).</text>
</comment>
<comment type="subunit">
    <molecule>Viroporin p7</molecule>
    <text evidence="2 6 12">Homohexamer (By similarity). Homoheptamer (By similarity). Interacts with protease NS2 (By similarity).</text>
</comment>
<comment type="subunit">
    <molecule>Protease NS2</molecule>
    <text evidence="6 12">Homodimer (By similarity). Interacts with host SPCS1; this interaction is essential for viral particle assembly (By similarity). Interacts with envelope glycoprotein E1 (By similarity). Interacts with envelope glycoprotein E2 (By similarity). Interacts with viroporin p7 (By similarity). Interacts with serine protease/helicase NS3 (By similarity). Part of the replication complex composed of NS2, NS3, NS4A, NS4B, NS5A and the RNA-directed RNA polymerase embedded in an ER-derived membranous web (By similarity). Part of the viral assembly initiation complex composed of NS2, E1, E2, NS3, NS4A, NS5A and the mature core protein (By similarity).</text>
</comment>
<comment type="subunit">
    <molecule>Serine protease/helicase NS3</molecule>
    <text evidence="4 6 12 13">Interacts with protease NS2 (By similarity). Interacts with non-structural protein 4A; this interaction stabilizes the folding of NS3 serine protease (By similarity). NS3-NS4A interaction is essential for NS3 activation and allows membrane anchorage of the latter (By similarity). NS3/NS4A complex also prevents phosphorylation of host IRF3, thus preventing the establishment of dsRNA induced antiviral state (By similarity). Interacts with host MAVS; this interaction leads to the cleavage and inhibition of host MAVS (By similarity). Interacts with host TICAM1; this interaction leads to the cleavage and inhibition of host TICAM1 (By similarity). Interacts with host TANK-binding kinase/TBK1; this interaction results in the inhibition of the association between TBK1 and IRF3, which leads to the inhibition of IRF3 activation (By similarity). Interacts with host RBM24 (By similarity). Part of the replication complex composed of NS2, NS3, NS4A, NS4B, NS5A and the RNA-directed RNA polymerase embedded in an ER-derived membranous web (By similarity). Part of the viral assembly initiation complex composed of NS2, E1, E2, NS3, NS4A, NS5A and the mature core protein (By similarity).</text>
</comment>
<comment type="subunit">
    <molecule>Non-structural protein 4A</molecule>
    <text evidence="3 4 6 12">Interacts with NS3 serine protease; this interaction stabilizes the folding of NS3 serine protease (By similarity). NS3-NS4A interaction is essential for NS3 activation and allows membrane anchorage of the latter (By similarity). Interacts with non-structural protein 5A (via N-terminus) (By similarity). Part of the replication complex composed of NS2, NS3, NS4A, NS4B, NS5A and the RNA-directed RNA polymerase embedded in an ER-derived membranous web (By similarity). Part of the viral assembly initiation complex composed of NS2, E1, E2, NS3, NS4A, NS5A and the mature core protein (By similarity).</text>
</comment>
<comment type="subunit">
    <molecule>Non-structural protein 4B</molecule>
    <text evidence="6 12">Homomultimer (By similarity). Interacts with non-structural protein NS5A (By similarity). Interacts with host PLA2G4C; this interaction likely initiates the recruitment of replication complexes to lipid droplets (By similarity). Interacts with host STING; this interaction disrupts the interaction between STING and TBK1 thereby suppressing the interferon signaling (By similarity). Part of the replication complex composed of NS2, NS3, NS4A, NS4B, NS5A and the RNA-directed RNA polymerase embedded in an ER-derived membranous web (By similarity).</text>
</comment>
<comment type="subunit">
    <molecule>Non-structural protein 5A</molecule>
    <text evidence="3 4 5 6 12">Monomer. Homodimer; dimerization is required for RNA-binding (By similarity). Interacts with the mature core protein (By similarity). Interacts (via N-terminus) with non-structural protein 4A (By similarity). Interacts with non-structural protein 4B. Interacts (via region D2) with RNA-directed RNA polymerase (By similarity). Part of the viral assembly initiation complex composed of NS2, E1, E2, NS3, NS4A, NS5A and the mature core protein (By similarity). Part of the replication complex composed of NS2, NS3, NS4A, NS4B, NS5A and the RNA-directed RNA polymerase embedded in an ER-derived membranous web (By similarity). Interacts with host GRB2 (By similarity). Interacts with host BIN1 (By similarity). Interacts with host PIK3R1 (By similarity). Interacts with host SRCAP (By similarity). Interacts with host FKBP8 (By similarity). Interacts (via C-terminus) with host VAPB (via MSP domain). Interacts with host EIF2AK2/PKR; this interaction leads to disruption of EIF2AK2 dimerization by NS5A and probably allows the virus to evade the innate immune response. Interacts (via N-terminus) with host PACSIN2 (via N-terminus); this interaction attenuates protein kinase C alpha-mediated phosphorylation of PACSIN2 by disrupting the interaction between PACSIN2 and PRKCA (By similarity). Interacts (via N-terminus) with host SRC kinase (via SH2 domain) (By similarity). Interacts with most Src-family kinases (By similarity). Interacts with host IFI27 and SKP2; promotes the ubiquitin-mediated proteasomal degradation of NS5A (By similarity). Interacts with host GPS2 (By similarity). Interacts with host TNFRSF21; this interaction allows the modulation by the virus of JNK, p38 MAPK, STAT3, and Akt signaling pathways in a DR6-dependent manner. Interacts (via N-terminus) with host CIDEB (via N-terminus); this interaction seems to regulate the association of HCV particles with APOE (By similarity). Interacts with host CHKA/Choline Kinase-alpha; CHKA bridges host PI4KA and NS5A and potentiates NS5A-stimulated PI4KA activity, which then facilitates the targeting of the ternary complex to the ER for viral replication (By similarity). Interacts with host SPSB2 (via C-terminus); this interaction targets NS5A for ubiquitination and degradation (By similarity). Interacts with host RAB18; this interaction may promote the association of NS5A and other replicase components with lipid droplets (By similarity). Interacts (via region D2) with host PPIA/CYPA; the interaction stimulates RNA-binding ability of NS5A and is dependent on the peptidyl-prolyl cis-trans isomerase activity of PPIA/CYPA. Interacts with host TRIM14; this interaction induces the degradation of NS5A (By similarity).</text>
</comment>
<comment type="subunit">
    <molecule>RNA-directed RNA polymerase</molecule>
    <text evidence="6">Homooligomer (By similarity). Interacts with non-structural protein 5A (By similarity). Interacts with host VAPB (By similarity). Interacts with host PRK2/PKN2 (By similarity). Interacts with host HNRNPA1 and SEPT6; these interactions facilitate viral replication (By similarity). Part of the replication complex composed of NS2, NS3, NS4A, NS4B, NS5A and the RNA-directed RNA polymerase (By similarity).</text>
</comment>
<comment type="subcellular location">
    <molecule>Core protein precursor</molecule>
    <subcellularLocation>
        <location evidence="5">Host endoplasmic reticulum membrane</location>
        <topology evidence="14">Single-pass membrane protein</topology>
    </subcellularLocation>
    <subcellularLocation>
        <location evidence="5">Host mitochondrion membrane</location>
        <topology evidence="14">Single-pass type I membrane protein</topology>
    </subcellularLocation>
    <text>The C-terminal transmembrane domain of the core protein precursor contains an ER signal leading the nascent polyprotein to the ER membrane.</text>
</comment>
<comment type="subcellular location">
    <molecule>Mature core protein</molecule>
    <subcellularLocation>
        <location evidence="12">Virion</location>
    </subcellularLocation>
    <subcellularLocation>
        <location evidence="12">Host cytoplasm</location>
    </subcellularLocation>
    <subcellularLocation>
        <location evidence="3">Host nucleus</location>
    </subcellularLocation>
    <subcellularLocation>
        <location evidence="12">Host lipid droplet</location>
    </subcellularLocation>
    <text evidence="6">Only a minor proportion of core protein is present in the nucleus (By similarity). Probably present on the surface of lipid droplets (By similarity).</text>
</comment>
<comment type="subcellular location">
    <molecule>Envelope glycoprotein E1</molecule>
    <subcellularLocation>
        <location evidence="20">Virion membrane</location>
        <topology evidence="20">Single-pass type I membrane protein</topology>
    </subcellularLocation>
    <subcellularLocation>
        <location>Host endoplasmic reticulum membrane</location>
        <topology evidence="6">Single-pass type I membrane protein</topology>
    </subcellularLocation>
    <text evidence="6">The C-terminal transmembrane domain acts as a signal sequence and forms a hairpin structure before cleavage by host signal peptidase (By similarity). After cleavage, the membrane sequence is retained at the C-terminus of the protein, serving as ER membrane anchor (By similarity). A reorientation of the second hydrophobic stretch occurs after cleavage producing a single reoriented transmembrane domain (By similarity). These events explain the final topology of the protein (By similarity).</text>
</comment>
<comment type="subcellular location">
    <molecule>Envelope glycoprotein E2</molecule>
    <subcellularLocation>
        <location evidence="20">Virion membrane</location>
        <topology evidence="20">Single-pass type I membrane protein</topology>
    </subcellularLocation>
    <subcellularLocation>
        <location>Host endoplasmic reticulum membrane</location>
        <topology evidence="6">Single-pass type I membrane protein</topology>
    </subcellularLocation>
    <subcellularLocation>
        <location evidence="13">Host lipid droplet</location>
    </subcellularLocation>
    <text evidence="6">The C-terminal transmembrane domain acts as a signal sequence and forms a hairpin structure before cleavage by host signal peptidase (By similarity). After cleavage, the membrane sequence is retained at the C-terminus of the protein, serving as ER membrane anchor (By similarity). A reorientation of the second hydrophobic stretch occurs after cleavage producing a single reoriented transmembrane domain (By similarity). These events explain the final topology of the protein (By similarity).</text>
</comment>
<comment type="subcellular location">
    <molecule>Viroporin p7</molecule>
    <subcellularLocation>
        <location evidence="6">Host endoplasmic reticulum membrane</location>
        <topology evidence="6">Multi-pass membrane protein</topology>
    </subcellularLocation>
    <subcellularLocation>
        <location evidence="6">Host mitochondrion</location>
    </subcellularLocation>
    <subcellularLocation>
        <location evidence="6">Host cell membrane</location>
    </subcellularLocation>
    <text evidence="6">The C-terminus of p7 membrane domain acts as a signal sequence (By similarity). After cleavage by host signal peptidase, the membrane sequence is retained at the C-terminus of the protein, serving as ER membrane anchor (By similarity). ER retention of p7 is leaky and a small fraction reaches the plasma membrane (By similarity).</text>
</comment>
<comment type="subcellular location">
    <molecule>Protease NS2</molecule>
    <subcellularLocation>
        <location evidence="6">Host endoplasmic reticulum membrane</location>
        <topology evidence="6">Multi-pass membrane protein</topology>
    </subcellularLocation>
    <subcellularLocation>
        <location evidence="13">Host lipid droplet</location>
    </subcellularLocation>
    <text evidence="12">Probably present on the surface of lipid droplets.</text>
</comment>
<comment type="subcellular location">
    <molecule>Serine protease/helicase NS3</molecule>
    <subcellularLocation>
        <location evidence="20">Host endoplasmic reticulum membrane</location>
        <topology evidence="20">Peripheral membrane protein</topology>
    </subcellularLocation>
    <text evidence="20">NS3 is associated to the ER membrane through its binding to NS4A.</text>
</comment>
<comment type="subcellular location">
    <molecule>Non-structural protein 4A</molecule>
    <subcellularLocation>
        <location evidence="20">Host endoplasmic reticulum membrane</location>
        <topology evidence="20">Single-pass type I membrane protein</topology>
    </subcellularLocation>
    <text>Host membrane insertion occurs after processing by the NS3 protease.</text>
</comment>
<comment type="subcellular location">
    <molecule>Non-structural protein 4B</molecule>
    <subcellularLocation>
        <location evidence="6">Host endoplasmic reticulum membrane</location>
        <topology evidence="6">Multi-pass membrane protein</topology>
    </subcellularLocation>
    <text evidence="6">A reorientation of the N-terminus into the ER lumen occurs post-translationally.</text>
</comment>
<comment type="subcellular location">
    <molecule>Non-structural protein 5A</molecule>
    <subcellularLocation>
        <location evidence="6">Host endoplasmic reticulum membrane</location>
        <topology evidence="6">Peripheral membrane protein</topology>
    </subcellularLocation>
    <subcellularLocation>
        <location evidence="6">Host cytoplasm</location>
        <location evidence="6">Host perinuclear region</location>
    </subcellularLocation>
    <subcellularLocation>
        <location evidence="3">Host mitochondrion</location>
    </subcellularLocation>
    <subcellularLocation>
        <location evidence="6">Host cytoplasm</location>
    </subcellularLocation>
    <subcellularLocation>
        <location evidence="3">Host nucleus</location>
    </subcellularLocation>
    <subcellularLocation>
        <location evidence="13">Host lipid droplet</location>
    </subcellularLocation>
    <text evidence="3 6">Host membrane insertion occurs after processing by the NS3 protease (By similarity). Localizes at the surface of lipid droplets (By similarity).</text>
</comment>
<comment type="subcellular location">
    <molecule>RNA-directed RNA polymerase</molecule>
    <subcellularLocation>
        <location evidence="6">Host cytoplasm</location>
    </subcellularLocation>
    <subcellularLocation>
        <location>Host endoplasmic reticulum membrane</location>
        <topology evidence="6">Single-pass type IV membrane protein</topology>
    </subcellularLocation>
    <text evidence="6">Host membrane insertion occurs after processing by the NS3 protease.</text>
</comment>
<comment type="domain">
    <molecule>Envelope glycoprotein E1</molecule>
    <text evidence="6">The transmembrane regions of envelope E1 and E2 glycoproteins are involved in heterodimer formation, ER localization, and assembly of these proteins.</text>
</comment>
<comment type="domain">
    <molecule>Envelope glycoprotein E2</molecule>
    <text evidence="4 6">The transmembrane regions of envelope E1 and E2 glycoproteins are involved in heterodimer formation, ER localization, and assembly of these proteins (By similarity). Envelope E2 glycoprotein contain two highly variable regions called hypervariable region 1 and 2 (HVR1 and HVR2) (By similarity). E2 also contain two segments involved in CD81-binding (By similarity). HVR1 is implicated in the SCARB1-mediated cell entry and probably acts as a regulator of the association of particles with lipids (By similarity).</text>
</comment>
<comment type="domain">
    <molecule>Protease NS2</molecule>
    <text evidence="4">The N-terminus of NS3 is required for the catalytic activity of protease NS2 (By similarity). The minimal catalytic region includes the C-terminus of NS2 and the N-terminus NS3 protease domain (active region NS2-3) (By similarity).</text>
</comment>
<comment type="domain">
    <molecule>Serine protease/helicase NS3</molecule>
    <text evidence="3 6">The N-terminal one-third contains the protease activity (By similarity). This region contains a zinc atom that does not belong to the active site, but may play a structural rather than a catalytic role (By similarity). This region is essential for the activity of protease NS2, maybe by contributing to the folding of the latter (By similarity). The NTPase/helicase activity is located in the twothirds C-terminus of NS3, this domain contains the NTPase and RNA-binding regions (By similarity).</text>
</comment>
<comment type="domain">
    <molecule>Non-structural protein 4B</molecule>
    <text evidence="12">Contains a glycine zipper region that critically contributes to the biogenesis of functional ER-derived replication organelles.</text>
</comment>
<comment type="domain">
    <molecule>Non-structural protein 5A</molecule>
    <text evidence="3 6">The N-terminus of NS5A acts as membrane anchor (By similarity). The central part of NS5A contains a variable region called interferon sensitivity determining region (ISDR) and seems to be intrinsically disordered and interacts with NS5B and host EIF2AK2 (By similarity). The C-terminus of NS5A contains a variable region called variable region 3 (V3) (By similarity). ISDR and V3 may be involved in sensitivity and/or resistance to IFN-alpha therapy (By similarity). The C-terminus contains a nuclear localization signal (By similarity). The SH3-binding domain is involved in the interaction with host BIN1, GRB2 and Src-family kinases (By similarity).</text>
</comment>
<comment type="PTM">
    <molecule>Genome polyprotein</molecule>
    <text evidence="5 6">Specific enzymatic cleavages in vivo yield mature proteins (By similarity). The structural proteins, core, E1, E2 and p7 are produced by proteolytic processing by host signal peptidases (By similarity). The core protein precursor is synthesized as a 23 kDa, which is retained in the ER membrane through the hydrophobic signal peptide (By similarity). Cleavage by the signal peptidase releases the 21 kDa mature core protein (By similarity). The cleavage of the core protein precursor occurs between aminoacids 176 and 188 but the exact cleavage site is not known (By similarity). Some degraded forms of the core protein appear as well during the course of infection (By similarity). The other proteins (p7, NS2, NS3, NS4A, NS4B, NS5A and NS5B) are cleaved by the viral proteases (By similarity). Autoprocessing between NS2 and NS3 is mediated by the NS2 cysteine protease catalytic domain and regulated by the NS3 N-terminal domain (By similarity).</text>
</comment>
<comment type="PTM">
    <molecule>Mature core protein</molecule>
    <text evidence="8">Phosphorylated by host PKC and PKA.</text>
</comment>
<comment type="PTM">
    <molecule>Mature core protein</molecule>
    <text evidence="9">Ubiquitinated; mediated by UBE3A and leading to core protein subsequent proteasomal degradation.</text>
</comment>
<comment type="PTM">
    <molecule>Envelope glycoprotein E1</molecule>
    <text evidence="6">Highly N-glycosylated.</text>
</comment>
<comment type="PTM">
    <molecule>Envelope glycoprotein E2</molecule>
    <text evidence="6">Highly N-glycosylated.</text>
</comment>
<comment type="PTM">
    <molecule>Protease NS2</molecule>
    <text evidence="6">Palmitoylation is required for NS2/3 autoprocessing and E2 recruitment to membranes.</text>
</comment>
<comment type="PTM">
    <molecule>Non-structural protein 4B</molecule>
    <text evidence="6">Palmitoylated. This modification may play a role in its polymerization or in protein-protein interactions.</text>
</comment>
<comment type="PTM">
    <molecule>Non-structural protein 5A</molecule>
    <text evidence="3 5">Phosphorylated on serines in a basal form termed p56 (By similarity). p58 is a hyperphosphorylated form of p56 (By similarity). p56 and p58 coexist in the cell in roughly equivalent amounts (By similarity). Hyperphosphorylation is dependent on the presence of NS4A (By similarity). Host CSNK1A1/CKI-alpha or RPS6KB1 kinases may be responsible for NS5A phosphorylation (By similarity).</text>
</comment>
<comment type="PTM">
    <molecule>Non-structural protein 5A</molecule>
    <text evidence="12">Tyrosine phosphorylation is essential for the interaction with host SRC.</text>
</comment>
<comment type="PTM">
    <molecule>Non-structural protein 5A</molecule>
    <text evidence="6">Ubiquitinated (By similarity). Ubiquitination, most probably at Lys-2352, mediated by host IFI27 and SKP2 leads to proteasomal degradation, restricting viral infection (By similarity). Ubiquitination by host TRIM22 leads to interruption of viral replication (By similarity).</text>
</comment>
<comment type="PTM">
    <molecule>RNA-directed RNA polymerase</molecule>
    <text evidence="3">The N-terminus is phosphorylated by host PRK2/PKN2.</text>
</comment>
<comment type="miscellaneous">
    <text evidence="20">Viral particle assembly takes place at the surface of ER-derived membranes in close proximity to lipid droplets. NS2 associates with E1/E2 glycoproteins, NS3 and NS5A, which interacts with the viral RNA and core protein to promote genome encapsidation. The nucleocapsid buds at the ER membrane where E1/E2 glycoproteins are anchored and afterward associate with nascent lipid droplet to acquire APOE and APOC. Secretion of viral particles is probably regulated by viroporin p7.</text>
</comment>
<comment type="miscellaneous">
    <molecule>Non-structural protein 5A</molecule>
    <text evidence="20">Cell culture adaptation of the virus leads to mutations in NS5A, reducing its inhibitory effect on replication.</text>
</comment>
<comment type="miscellaneous">
    <molecule>Mature core protein</molecule>
    <text evidence="3">Exerts viral interference on hepatitis B virus when HCV and HBV coinfect the same cell, by suppressing HBV gene expression, RNA encapsidation and budding.</text>
</comment>
<comment type="similarity">
    <text evidence="20">Belongs to the hepacivirus polyprotein family.</text>
</comment>
<comment type="caution">
    <text evidence="20">The core gene probably also codes for alternative reading frame proteins (ARFPs). Many functions depicted for the core protein might belong to the ARFPs.</text>
</comment>
<comment type="caution">
    <text evidence="20">Lacks the conserved His residue in position 1084 essential for serine protease NS3 activity. Its enzyme activity is therefore unsure.</text>
</comment>
<name>POLG_HCVVP</name>
<reference key="1">
    <citation type="journal article" date="1998" name="J. Gen. Virol.">
        <title>The entire nucleotide sequences of three hepatitis C virus isolates in genetic groups 7-9 and comparison with those in the other eight genetic groups.</title>
        <authorList>
            <person name="Tokita H."/>
            <person name="Okamoto H."/>
            <person name="Iizuka H."/>
            <person name="Kishimoto J."/>
            <person name="Tsuda F."/>
            <person name="Miyakawa Y."/>
            <person name="Mayumi M."/>
        </authorList>
    </citation>
    <scope>NUCLEOTIDE SEQUENCE [GENOMIC RNA]</scope>
</reference>
<reference key="2">
    <citation type="journal article" date="2000" name="J. Viral Hepat.">
        <title>Properties of the hepatitis C virus core protein: a structural protein that modulates cellular processes.</title>
        <authorList>
            <person name="McLauchlan J."/>
        </authorList>
    </citation>
    <scope>REVIEW</scope>
</reference>
<reference key="3">
    <citation type="journal article" date="2004" name="Hepatology">
        <title>Structural biology of hepatitis C virus.</title>
        <authorList>
            <person name="Penin F."/>
            <person name="Dubuisson J."/>
            <person name="Rey F.A."/>
            <person name="Moradpour D."/>
            <person name="Pawlotsky J.-M."/>
        </authorList>
    </citation>
    <scope>REVIEW</scope>
</reference>
<keyword id="KW-0007">Acetylation</keyword>
<keyword id="KW-1072">Activation of host autophagy by virus</keyword>
<keyword id="KW-0053">Apoptosis</keyword>
<keyword id="KW-0067">ATP-binding</keyword>
<keyword id="KW-0167">Capsid protein</keyword>
<keyword id="KW-1165">Clathrin-mediated endocytosis of virus by host</keyword>
<keyword id="KW-1015">Disulfide bond</keyword>
<keyword id="KW-1170">Fusion of virus membrane with host endosomal membrane</keyword>
<keyword id="KW-1168">Fusion of virus membrane with host membrane</keyword>
<keyword id="KW-1078">G1/S host cell cycle checkpoint dysregulation by virus</keyword>
<keyword id="KW-0325">Glycoprotein</keyword>
<keyword id="KW-0347">Helicase</keyword>
<keyword id="KW-1032">Host cell membrane</keyword>
<keyword id="KW-1035">Host cytoplasm</keyword>
<keyword id="KW-1038">Host endoplasmic reticulum</keyword>
<keyword id="KW-1041">Host lipid droplet</keyword>
<keyword id="KW-1043">Host membrane</keyword>
<keyword id="KW-1045">Host mitochondrion</keyword>
<keyword id="KW-1048">Host nucleus</keyword>
<keyword id="KW-0945">Host-virus interaction</keyword>
<keyword id="KW-0378">Hydrolase</keyword>
<keyword id="KW-1090">Inhibition of host innate immune response by virus</keyword>
<keyword id="KW-1114">Inhibition of host interferon signaling pathway by virus</keyword>
<keyword id="KW-1097">Inhibition of host MAVS by virus</keyword>
<keyword id="KW-1113">Inhibition of host RLR pathway by virus</keyword>
<keyword id="KW-1105">Inhibition of host STAT1 by virus</keyword>
<keyword id="KW-1110">Inhibition of host TRAFs by virus</keyword>
<keyword id="KW-0922">Interferon antiviral system evasion</keyword>
<keyword id="KW-0407">Ion channel</keyword>
<keyword id="KW-0406">Ion transport</keyword>
<keyword id="KW-1017">Isopeptide bond</keyword>
<keyword id="KW-0449">Lipoprotein</keyword>
<keyword id="KW-0460">Magnesium</keyword>
<keyword id="KW-0472">Membrane</keyword>
<keyword id="KW-0479">Metal-binding</keyword>
<keyword id="KW-1121">Modulation of host cell cycle by virus</keyword>
<keyword id="KW-0511">Multifunctional enzyme</keyword>
<keyword id="KW-0547">Nucleotide-binding</keyword>
<keyword id="KW-0548">Nucleotidyltransferase</keyword>
<keyword id="KW-0553">Oncogene</keyword>
<keyword id="KW-0564">Palmitate</keyword>
<keyword id="KW-0597">Phosphoprotein</keyword>
<keyword id="KW-0645">Protease</keyword>
<keyword id="KW-0687">Ribonucleoprotein</keyword>
<keyword id="KW-0694">RNA-binding</keyword>
<keyword id="KW-0696">RNA-directed RNA polymerase</keyword>
<keyword id="KW-0720">Serine protease</keyword>
<keyword id="KW-0729">SH3-binding</keyword>
<keyword id="KW-0788">Thiol protease</keyword>
<keyword id="KW-0804">Transcription</keyword>
<keyword id="KW-0805">Transcription regulation</keyword>
<keyword id="KW-0808">Transferase</keyword>
<keyword id="KW-0812">Transmembrane</keyword>
<keyword id="KW-1133">Transmembrane helix</keyword>
<keyword id="KW-0813">Transport</keyword>
<keyword id="KW-0832">Ubl conjugation</keyword>
<keyword id="KW-1161">Viral attachment to host cell</keyword>
<keyword id="KW-0261">Viral envelope protein</keyword>
<keyword id="KW-0899">Viral immunoevasion</keyword>
<keyword id="KW-1182">Viral ion channel</keyword>
<keyword id="KW-0543">Viral nucleoprotein</keyword>
<keyword id="KW-1162">Viral penetration into host cytoplasm</keyword>
<keyword id="KW-0693">Viral RNA replication</keyword>
<keyword id="KW-0946">Virion</keyword>
<keyword id="KW-1164">Virus endocytosis by host</keyword>
<keyword id="KW-1160">Virus entry into host cell</keyword>
<keyword id="KW-0862">Zinc</keyword>
<evidence type="ECO:0000250" key="1"/>
<evidence type="ECO:0000250" key="2">
    <source>
        <dbReference type="UniProtKB" id="O92972"/>
    </source>
</evidence>
<evidence type="ECO:0000250" key="3">
    <source>
        <dbReference type="UniProtKB" id="P26662"/>
    </source>
</evidence>
<evidence type="ECO:0000250" key="4">
    <source>
        <dbReference type="UniProtKB" id="P26663"/>
    </source>
</evidence>
<evidence type="ECO:0000250" key="5">
    <source>
        <dbReference type="UniProtKB" id="P26664"/>
    </source>
</evidence>
<evidence type="ECO:0000250" key="6">
    <source>
        <dbReference type="UniProtKB" id="P27958"/>
    </source>
</evidence>
<evidence type="ECO:0000250" key="7">
    <source>
        <dbReference type="UniProtKB" id="P29846"/>
    </source>
</evidence>
<evidence type="ECO:0000250" key="8">
    <source>
        <dbReference type="UniProtKB" id="Q01403"/>
    </source>
</evidence>
<evidence type="ECO:0000250" key="9">
    <source>
        <dbReference type="UniProtKB" id="Q03463"/>
    </source>
</evidence>
<evidence type="ECO:0000250" key="10">
    <source>
        <dbReference type="UniProtKB" id="Q5EG65"/>
    </source>
</evidence>
<evidence type="ECO:0000250" key="11">
    <source>
        <dbReference type="UniProtKB" id="Q913V3"/>
    </source>
</evidence>
<evidence type="ECO:0000250" key="12">
    <source>
        <dbReference type="UniProtKB" id="Q99IB8"/>
    </source>
</evidence>
<evidence type="ECO:0000250" key="13">
    <source>
        <dbReference type="UniProtKB" id="Q9WMX2"/>
    </source>
</evidence>
<evidence type="ECO:0000255" key="14"/>
<evidence type="ECO:0000255" key="15">
    <source>
        <dbReference type="PROSITE-ProRule" id="PRU00539"/>
    </source>
</evidence>
<evidence type="ECO:0000255" key="16">
    <source>
        <dbReference type="PROSITE-ProRule" id="PRU00541"/>
    </source>
</evidence>
<evidence type="ECO:0000255" key="17">
    <source>
        <dbReference type="PROSITE-ProRule" id="PRU01030"/>
    </source>
</evidence>
<evidence type="ECO:0000255" key="18">
    <source>
        <dbReference type="PROSITE-ProRule" id="PRU01166"/>
    </source>
</evidence>
<evidence type="ECO:0000256" key="19">
    <source>
        <dbReference type="SAM" id="MobiDB-lite"/>
    </source>
</evidence>
<evidence type="ECO:0000305" key="20"/>
<protein>
    <recommendedName>
        <fullName>Genome polyprotein</fullName>
    </recommendedName>
    <component>
        <recommendedName>
            <fullName>Core protein precursor</fullName>
        </recommendedName>
        <alternativeName>
            <fullName>Capsid protein C</fullName>
        </alternativeName>
        <alternativeName>
            <fullName>p23</fullName>
        </alternativeName>
    </component>
    <component>
        <recommendedName>
            <fullName>Mature core protein</fullName>
        </recommendedName>
        <alternativeName>
            <fullName>p21</fullName>
        </alternativeName>
    </component>
    <component>
        <recommendedName>
            <fullName>Envelope glycoprotein E1</fullName>
        </recommendedName>
        <alternativeName>
            <fullName>gp32</fullName>
        </alternativeName>
        <alternativeName>
            <fullName>gp35</fullName>
        </alternativeName>
    </component>
    <component>
        <recommendedName>
            <fullName>Envelope glycoprotein E2</fullName>
        </recommendedName>
        <alternativeName>
            <fullName>NS1</fullName>
        </alternativeName>
        <alternativeName>
            <fullName>gp68</fullName>
        </alternativeName>
        <alternativeName>
            <fullName>gp70</fullName>
        </alternativeName>
    </component>
    <component>
        <recommendedName>
            <fullName>Viroporin p7</fullName>
        </recommendedName>
    </component>
    <component>
        <recommendedName>
            <fullName>Protease NS2</fullName>
            <shortName>p23</shortName>
            <ecNumber evidence="4">3.4.22.-</ecNumber>
        </recommendedName>
        <alternativeName>
            <fullName>Non-structural protein 2</fullName>
            <shortName>NS2</shortName>
        </alternativeName>
    </component>
    <component>
        <recommendedName>
            <fullName>Serine protease/helicase NS3</fullName>
            <ecNumber evidence="6">3.4.21.98</ecNumber>
            <ecNumber evidence="6">3.6.1.15</ecNumber>
            <ecNumber evidence="6">3.6.4.13</ecNumber>
        </recommendedName>
        <alternativeName>
            <fullName>Hepacivirin</fullName>
        </alternativeName>
        <alternativeName>
            <fullName evidence="6">NS3 helicase</fullName>
        </alternativeName>
        <alternativeName>
            <fullName evidence="6">NS3 protease</fullName>
        </alternativeName>
        <alternativeName>
            <fullName>NS3P</fullName>
        </alternativeName>
        <alternativeName>
            <fullName>Viroporin p70</fullName>
        </alternativeName>
    </component>
    <component>
        <recommendedName>
            <fullName>Non-structural protein 4A</fullName>
            <shortName>NS4A</shortName>
        </recommendedName>
        <alternativeName>
            <fullName>p8</fullName>
        </alternativeName>
    </component>
    <component>
        <recommendedName>
            <fullName>Non-structural protein 4B</fullName>
            <shortName>NS4B</shortName>
        </recommendedName>
        <alternativeName>
            <fullName>p27</fullName>
        </alternativeName>
    </component>
    <component>
        <recommendedName>
            <fullName>Non-structural protein 5A</fullName>
            <shortName>NS5A</shortName>
        </recommendedName>
        <alternativeName>
            <fullName>p56/58</fullName>
        </alternativeName>
    </component>
    <component>
        <recommendedName>
            <fullName>RNA-directed RNA polymerase</fullName>
            <ecNumber evidence="6">2.7.7.48</ecNumber>
        </recommendedName>
        <alternativeName>
            <fullName>NS5B</fullName>
        </alternativeName>
        <alternativeName>
            <fullName>p68</fullName>
        </alternativeName>
    </component>
</protein>
<proteinExistence type="inferred from homology"/>
<feature type="initiator methionine" description="Removed; by host" evidence="5">
    <location>
        <position position="1"/>
    </location>
</feature>
<feature type="chain" id="PRO_0000450932" description="Genome polyprotein">
    <location>
        <begin position="2"/>
        <end position="3015"/>
    </location>
</feature>
<feature type="chain" id="PRO_0000045736" description="Core protein precursor" evidence="14">
    <location>
        <begin position="2"/>
        <end position="191"/>
    </location>
</feature>
<feature type="chain" id="PRO_0000045737" description="Mature core protein">
    <location>
        <begin position="2"/>
        <end position="177"/>
    </location>
</feature>
<feature type="propeptide" id="PRO_0000045738" description="ER anchor for the core protein, removed in mature form by host signal peptidase">
    <location>
        <begin position="178"/>
        <end position="191"/>
    </location>
</feature>
<feature type="chain" id="PRO_0000045739" description="Envelope glycoprotein E1">
    <location>
        <begin position="192"/>
        <end position="383"/>
    </location>
</feature>
<feature type="chain" id="PRO_0000045740" description="Envelope glycoprotein E2">
    <location>
        <begin position="384"/>
        <end position="747"/>
    </location>
</feature>
<feature type="chain" id="PRO_0000045741" description="Viroporin p7">
    <location>
        <begin position="748"/>
        <end position="810"/>
    </location>
</feature>
<feature type="chain" id="PRO_0000045742" description="Protease NS2" evidence="17">
    <location>
        <begin position="811"/>
        <end position="1027"/>
    </location>
</feature>
<feature type="chain" id="PRO_0000045743" description="Serine protease/helicase NS3">
    <location>
        <begin position="1028"/>
        <end position="1658"/>
    </location>
</feature>
<feature type="chain" id="PRO_0000045744" description="Non-structural protein 4A">
    <location>
        <begin position="1659"/>
        <end position="1712"/>
    </location>
</feature>
<feature type="chain" id="PRO_0000045745" description="Non-structural protein 4B">
    <location>
        <begin position="1713"/>
        <end position="1973"/>
    </location>
</feature>
<feature type="chain" id="PRO_0000045746" description="Non-structural protein 5A">
    <location>
        <begin position="1974"/>
        <end position="2424"/>
    </location>
</feature>
<feature type="chain" id="PRO_0000045747" description="RNA-directed RNA polymerase">
    <location>
        <begin position="2425"/>
        <end position="3015"/>
    </location>
</feature>
<feature type="topological domain" description="Cytoplasmic" evidence="14">
    <location>
        <begin position="2"/>
        <end position="168"/>
    </location>
</feature>
<feature type="transmembrane region" description="Helical" evidence="14">
    <location>
        <begin position="169"/>
        <end position="189"/>
    </location>
</feature>
<feature type="topological domain" description="Lumenal" evidence="6">
    <location>
        <begin position="190"/>
        <end position="358"/>
    </location>
</feature>
<feature type="transmembrane region" description="Helical" evidence="6">
    <location>
        <begin position="359"/>
        <end position="379"/>
    </location>
</feature>
<feature type="topological domain" description="Lumenal" evidence="6">
    <location>
        <begin position="380"/>
        <end position="726"/>
    </location>
</feature>
<feature type="transmembrane region" description="Helical" evidence="6">
    <location>
        <begin position="727"/>
        <end position="747"/>
    </location>
</feature>
<feature type="topological domain" description="Lumenal" evidence="6">
    <location>
        <begin position="748"/>
        <end position="758"/>
    </location>
</feature>
<feature type="transmembrane region" description="Helical" evidence="6">
    <location>
        <begin position="759"/>
        <end position="779"/>
    </location>
</feature>
<feature type="topological domain" description="Cytoplasmic" evidence="6">
    <location>
        <begin position="780"/>
        <end position="783"/>
    </location>
</feature>
<feature type="transmembrane region" description="Helical" evidence="6">
    <location>
        <begin position="784"/>
        <end position="804"/>
    </location>
</feature>
<feature type="topological domain" description="Lumenal" evidence="6">
    <location>
        <begin position="805"/>
        <end position="814"/>
    </location>
</feature>
<feature type="transmembrane region" description="Helical" evidence="13">
    <location>
        <begin position="815"/>
        <end position="835"/>
    </location>
</feature>
<feature type="topological domain" description="Cytoplasmic" evidence="13">
    <location>
        <begin position="836"/>
        <end position="882"/>
    </location>
</feature>
<feature type="transmembrane region" description="Helical" evidence="13">
    <location>
        <begin position="883"/>
        <end position="903"/>
    </location>
</feature>
<feature type="topological domain" description="Lumenal" evidence="13">
    <location>
        <begin position="904"/>
        <end position="929"/>
    </location>
</feature>
<feature type="transmembrane region" description="Helical" evidence="13">
    <location>
        <begin position="930"/>
        <end position="950"/>
    </location>
</feature>
<feature type="topological domain" description="Cytoplasmic" evidence="13">
    <location>
        <begin position="951"/>
        <end position="1658"/>
    </location>
</feature>
<feature type="transmembrane region" description="Helical" evidence="14">
    <location>
        <begin position="1659"/>
        <end position="1679"/>
    </location>
</feature>
<feature type="topological domain" description="Cytoplasmic" evidence="14">
    <location>
        <begin position="1680"/>
        <end position="1806"/>
    </location>
</feature>
<feature type="transmembrane region" description="Helical" evidence="14">
    <location>
        <begin position="1807"/>
        <end position="1827"/>
    </location>
</feature>
<feature type="topological domain" description="Lumenal" evidence="6">
    <location>
        <begin position="1828"/>
        <end position="1829"/>
    </location>
</feature>
<feature type="transmembrane region" description="Helical" evidence="14">
    <location>
        <begin position="1830"/>
        <end position="1850"/>
    </location>
</feature>
<feature type="topological domain" description="Cytoplasmic" evidence="14">
    <location>
        <position position="1851"/>
    </location>
</feature>
<feature type="transmembrane region" description="Helical" evidence="14">
    <location>
        <begin position="1852"/>
        <end position="1872"/>
    </location>
</feature>
<feature type="topological domain" description="Lumenal" evidence="14">
    <location>
        <begin position="1873"/>
        <end position="1882"/>
    </location>
</feature>
<feature type="transmembrane region" description="Helical" evidence="14">
    <location>
        <begin position="1883"/>
        <end position="1903"/>
    </location>
</feature>
<feature type="topological domain" description="Cytoplasmic" evidence="14">
    <location>
        <begin position="1904"/>
        <end position="1973"/>
    </location>
</feature>
<feature type="intramembrane region" evidence="6">
    <location>
        <begin position="1974"/>
        <end position="2003"/>
    </location>
</feature>
<feature type="topological domain" description="Cytoplasmic" evidence="6">
    <location>
        <begin position="2004"/>
        <end position="2994"/>
    </location>
</feature>
<feature type="transmembrane region" description="Helical" evidence="6">
    <location>
        <begin position="2995"/>
        <end position="3015"/>
    </location>
</feature>
<feature type="domain" description="Peptidase C18" evidence="17">
    <location>
        <begin position="904"/>
        <end position="1027"/>
    </location>
</feature>
<feature type="domain" description="Peptidase S29" evidence="18">
    <location>
        <begin position="1028"/>
        <end position="1209"/>
    </location>
</feature>
<feature type="domain" description="Helicase ATP-binding" evidence="16">
    <location>
        <begin position="1218"/>
        <end position="1370"/>
    </location>
</feature>
<feature type="domain" description="RdRp catalytic" evidence="15">
    <location>
        <begin position="2638"/>
        <end position="2756"/>
    </location>
</feature>
<feature type="region of interest" description="Disordered" evidence="6">
    <location>
        <begin position="2"/>
        <end position="75"/>
    </location>
</feature>
<feature type="region of interest" description="Interaction with DDX3X" evidence="10">
    <location>
        <begin position="2"/>
        <end position="59"/>
    </location>
</feature>
<feature type="region of interest" description="Interaction with EIF2AK2/PKR" evidence="3">
    <location>
        <begin position="2"/>
        <end position="58"/>
    </location>
</feature>
<feature type="region of interest" description="Interaction with STAT1" evidence="3">
    <location>
        <begin position="2"/>
        <end position="23"/>
    </location>
</feature>
<feature type="region of interest" description="Important for endoplasmic reticulum and mitochondrial localization" evidence="3">
    <location>
        <begin position="112"/>
        <end position="152"/>
    </location>
</feature>
<feature type="region of interest" description="Interaction with APOA2" evidence="7">
    <location>
        <begin position="122"/>
        <end position="173"/>
    </location>
</feature>
<feature type="region of interest" description="Important for lipid droplets localization" evidence="6">
    <location>
        <begin position="164"/>
        <end position="167"/>
    </location>
</feature>
<feature type="region of interest" description="Important for fusion" evidence="6">
    <location>
        <begin position="265"/>
        <end position="296"/>
    </location>
</feature>
<feature type="region of interest" description="HVR1" evidence="6">
    <location>
        <begin position="385"/>
        <end position="411"/>
    </location>
</feature>
<feature type="region of interest" description="HVR2" evidence="6">
    <location>
        <begin position="474"/>
        <end position="478"/>
    </location>
</feature>
<feature type="region of interest" description="CD81-binding 1" evidence="4">
    <location>
        <begin position="480"/>
        <end position="493"/>
    </location>
</feature>
<feature type="region of interest" description="CD81-binding 2" evidence="4">
    <location>
        <begin position="544"/>
        <end position="551"/>
    </location>
</feature>
<feature type="region of interest" description="PKR/eIF2-alpha phosphorylation homology domain (PePHD)">
    <location>
        <begin position="661"/>
        <end position="672"/>
    </location>
</feature>
<feature type="region of interest" description="Protease NS2-3" evidence="4">
    <location>
        <begin position="905"/>
        <end position="1207"/>
    </location>
</feature>
<feature type="region of interest" description="Interaction with host SCPS1" evidence="12">
    <location>
        <begin position="930"/>
        <end position="950"/>
    </location>
</feature>
<feature type="region of interest" description="RNA-binding" evidence="4">
    <location>
        <begin position="1487"/>
        <end position="1499"/>
    </location>
</feature>
<feature type="region of interest" description="NS3-binding" evidence="6">
    <location>
        <begin position="1680"/>
        <end position="1691"/>
    </location>
</feature>
<feature type="region of interest" description="Transcriptional activation" evidence="14">
    <location>
        <begin position="2121"/>
        <end position="2334"/>
    </location>
</feature>
<feature type="region of interest" description="FKBP8-binding" evidence="3">
    <location>
        <begin position="2121"/>
        <end position="2209"/>
    </location>
</feature>
<feature type="region of interest" description="Interaction with non-structural protein 4A" evidence="3">
    <location>
        <begin position="2136"/>
        <end position="2140"/>
    </location>
</feature>
<feature type="region of interest" description="Interaction with host SKP2" evidence="6">
    <location>
        <begin position="2190"/>
        <end position="2442"/>
    </location>
</feature>
<feature type="region of interest" description="Interaction with EIF2AK2/PKR" evidence="4">
    <location>
        <begin position="2211"/>
        <end position="2276"/>
    </location>
</feature>
<feature type="region of interest" description="ISDR" evidence="3">
    <location>
        <begin position="2211"/>
        <end position="2250"/>
    </location>
</feature>
<feature type="region of interest" description="NS4B-binding" evidence="14">
    <location>
        <begin position="2250"/>
        <end position="2308"/>
    </location>
</feature>
<feature type="region of interest" description="V3">
    <location>
        <begin position="2301"/>
        <end position="2378"/>
    </location>
</feature>
<feature type="region of interest" description="Disordered" evidence="19">
    <location>
        <begin position="2319"/>
        <end position="2338"/>
    </location>
</feature>
<feature type="region of interest" description="Disordered" evidence="19">
    <location>
        <begin position="2352"/>
        <end position="2413"/>
    </location>
</feature>
<feature type="short sequence motif" description="Nuclear localization signal" evidence="12">
    <location>
        <begin position="5"/>
        <end position="13"/>
    </location>
</feature>
<feature type="short sequence motif" description="Nuclear localization signal" evidence="12">
    <location>
        <begin position="38"/>
        <end position="43"/>
    </location>
</feature>
<feature type="short sequence motif" description="Nuclear localization signal" evidence="12">
    <location>
        <begin position="58"/>
        <end position="64"/>
    </location>
</feature>
<feature type="short sequence motif" description="Nuclear localization signal" evidence="12">
    <location>
        <begin position="66"/>
        <end position="71"/>
    </location>
</feature>
<feature type="short sequence motif" description="DECH box" evidence="12">
    <location>
        <begin position="1317"/>
        <end position="1320"/>
    </location>
</feature>
<feature type="short sequence motif" description="SH3-binding" evidence="14">
    <location>
        <begin position="2324"/>
        <end position="2327"/>
    </location>
</feature>
<feature type="short sequence motif" description="Nuclear localization signal" evidence="3">
    <location>
        <begin position="2329"/>
        <end position="2337"/>
    </location>
</feature>
<feature type="compositionally biased region" description="Basic residues" evidence="19">
    <location>
        <begin position="7"/>
        <end position="16"/>
    </location>
</feature>
<feature type="compositionally biased region" description="Low complexity" evidence="19">
    <location>
        <begin position="32"/>
        <end position="47"/>
    </location>
</feature>
<feature type="compositionally biased region" description="Polar residues" evidence="19">
    <location>
        <begin position="2355"/>
        <end position="2365"/>
    </location>
</feature>
<feature type="compositionally biased region" description="Basic and acidic residues" evidence="19">
    <location>
        <begin position="2368"/>
        <end position="2383"/>
    </location>
</feature>
<feature type="active site" description="For protease NS2 activity; shared with dimeric partner" evidence="17">
    <location>
        <position position="953"/>
    </location>
</feature>
<feature type="active site" description="For protease NS2 activity; shared with dimeric partner" evidence="17">
    <location>
        <position position="973"/>
    </location>
</feature>
<feature type="active site" description="For protease NS2 activity; shared with dimeric partner" evidence="17">
    <location>
        <position position="994"/>
    </location>
</feature>
<feature type="active site" description="Charge relay system; for serine protease NS3 activity" evidence="1">
    <location>
        <position position="1108"/>
    </location>
</feature>
<feature type="active site" description="Charge relay system; for serine protease NS3 activity" evidence="1">
    <location>
        <position position="1166"/>
    </location>
</feature>
<feature type="binding site" evidence="18">
    <location>
        <position position="1124"/>
    </location>
    <ligand>
        <name>Zn(2+)</name>
        <dbReference type="ChEBI" id="CHEBI:29105"/>
        <label>1</label>
        <note>structural; for NS3 protease activity and NS2/3 auto-cleavage activity</note>
    </ligand>
</feature>
<feature type="binding site" evidence="18">
    <location>
        <position position="1126"/>
    </location>
    <ligand>
        <name>Zn(2+)</name>
        <dbReference type="ChEBI" id="CHEBI:29105"/>
        <label>1</label>
        <note>structural; for NS3 protease activity and NS2/3 auto-cleavage activity</note>
    </ligand>
</feature>
<feature type="binding site" evidence="18">
    <location>
        <position position="1172"/>
    </location>
    <ligand>
        <name>Zn(2+)</name>
        <dbReference type="ChEBI" id="CHEBI:29105"/>
        <label>1</label>
        <note>structural; for NS3 protease activity and NS2/3 auto-cleavage activity</note>
    </ligand>
</feature>
<feature type="binding site" evidence="18">
    <location>
        <position position="1176"/>
    </location>
    <ligand>
        <name>Zn(2+)</name>
        <dbReference type="ChEBI" id="CHEBI:29105"/>
        <label>1</label>
        <note>structural; for NS3 protease activity and NS2/3 auto-cleavage activity</note>
    </ligand>
</feature>
<feature type="binding site" evidence="16">
    <location>
        <begin position="1231"/>
        <end position="1238"/>
    </location>
    <ligand>
        <name>ATP</name>
        <dbReference type="ChEBI" id="CHEBI:30616"/>
    </ligand>
</feature>
<feature type="binding site" evidence="13">
    <location>
        <position position="1238"/>
    </location>
    <ligand>
        <name>Mg(2+)</name>
        <dbReference type="ChEBI" id="CHEBI:18420"/>
        <label>1</label>
        <note>catalytic; for NS3 helicase activity</note>
    </ligand>
</feature>
<feature type="binding site" evidence="13">
    <location>
        <position position="1318"/>
    </location>
    <ligand>
        <name>Mg(2+)</name>
        <dbReference type="ChEBI" id="CHEBI:18420"/>
        <label>1</label>
        <note>catalytic; for NS3 helicase activity</note>
    </ligand>
</feature>
<feature type="binding site" evidence="13">
    <location>
        <position position="2012"/>
    </location>
    <ligand>
        <name>Zn(2+)</name>
        <dbReference type="ChEBI" id="CHEBI:29105"/>
        <label>2</label>
        <note>structural</note>
    </ligand>
</feature>
<feature type="binding site" evidence="13">
    <location>
        <position position="2030"/>
    </location>
    <ligand>
        <name>Zn(2+)</name>
        <dbReference type="ChEBI" id="CHEBI:29105"/>
        <label>2</label>
        <note>structural</note>
    </ligand>
</feature>
<feature type="binding site" evidence="13">
    <location>
        <position position="2032"/>
    </location>
    <ligand>
        <name>Zn(2+)</name>
        <dbReference type="ChEBI" id="CHEBI:29105"/>
        <label>2</label>
        <note>structural</note>
    </ligand>
</feature>
<feature type="binding site" evidence="13">
    <location>
        <position position="2053"/>
    </location>
    <ligand>
        <name>Zn(2+)</name>
        <dbReference type="ChEBI" id="CHEBI:29105"/>
        <label>2</label>
        <note>structural</note>
    </ligand>
</feature>
<feature type="binding site" evidence="4">
    <location>
        <position position="2644"/>
    </location>
    <ligand>
        <name>Mg(2+)</name>
        <dbReference type="ChEBI" id="CHEBI:18420"/>
        <label>2</label>
        <note>catalytic; for RNA-directed RNA polymerase activity</note>
    </ligand>
</feature>
<feature type="binding site" evidence="4">
    <location>
        <position position="2742"/>
    </location>
    <ligand>
        <name>Mg(2+)</name>
        <dbReference type="ChEBI" id="CHEBI:18420"/>
        <label>2</label>
        <note>catalytic; for RNA-directed RNA polymerase activity</note>
    </ligand>
</feature>
<feature type="binding site" evidence="4">
    <location>
        <position position="2743"/>
    </location>
    <ligand>
        <name>Mg(2+)</name>
        <dbReference type="ChEBI" id="CHEBI:18420"/>
        <label>2</label>
        <note>catalytic; for RNA-directed RNA polymerase activity</note>
    </ligand>
</feature>
<feature type="site" description="Cleavage; by host signal peptide peptidase" evidence="3">
    <location>
        <begin position="177"/>
        <end position="178"/>
    </location>
</feature>
<feature type="site" description="Cleavage; by host signal peptidase" evidence="3">
    <location>
        <begin position="191"/>
        <end position="192"/>
    </location>
</feature>
<feature type="site" description="Cleavage; by host signal peptidase" evidence="3">
    <location>
        <begin position="383"/>
        <end position="384"/>
    </location>
</feature>
<feature type="site" description="Cleavage; by host signal peptidase">
    <location>
        <begin position="747"/>
        <end position="748"/>
    </location>
</feature>
<feature type="site" description="Cleavage; by host signal peptidase">
    <location>
        <begin position="810"/>
        <end position="811"/>
    </location>
</feature>
<feature type="site" description="Cleavage; by protease NS2" evidence="17">
    <location>
        <begin position="1027"/>
        <end position="1028"/>
    </location>
</feature>
<feature type="site" description="Cleavage; by serine protease NS3" evidence="6">
    <location>
        <begin position="1658"/>
        <end position="1659"/>
    </location>
</feature>
<feature type="site" description="Cleavage; by serine protease NS3" evidence="6">
    <location>
        <begin position="1712"/>
        <end position="1713"/>
    </location>
</feature>
<feature type="site" description="Cleavage; by serine protease NS3" evidence="6">
    <location>
        <begin position="1973"/>
        <end position="1974"/>
    </location>
</feature>
<feature type="site" description="Cleavage; by serine protease NS3" evidence="6">
    <location>
        <begin position="2424"/>
        <end position="2425"/>
    </location>
</feature>
<feature type="modified residue" description="N-acetylserine; by host" evidence="11">
    <location>
        <position position="2"/>
    </location>
</feature>
<feature type="modified residue" description="Phosphoserine; by host" evidence="8">
    <location>
        <position position="53"/>
    </location>
</feature>
<feature type="modified residue" description="Phosphoserine; by host" evidence="8">
    <location>
        <position position="99"/>
    </location>
</feature>
<feature type="modified residue" description="Phosphoserine; by host" evidence="8">
    <location>
        <position position="116"/>
    </location>
</feature>
<feature type="modified residue" description="Phosphoserine; by host" evidence="13">
    <location>
        <position position="2195"/>
    </location>
</feature>
<feature type="modified residue" description="Phosphoserine; by host" evidence="13">
    <location>
        <position position="2198"/>
    </location>
</feature>
<feature type="modified residue" description="Phosphoserine; by host" evidence="13">
    <location>
        <position position="2202"/>
    </location>
</feature>
<feature type="modified residue" description="Phosphoserine; by host" evidence="13">
    <location>
        <position position="2205"/>
    </location>
</feature>
<feature type="modified residue" description="Phosphoserine; by host" evidence="12">
    <location>
        <position position="2208"/>
    </location>
</feature>
<feature type="modified residue" description="Phosphoserine; by host" evidence="12">
    <location>
        <position position="2211"/>
    </location>
</feature>
<feature type="modified residue" description="Phosphoserine; by host" evidence="3">
    <location>
        <position position="2453"/>
    </location>
</feature>
<feature type="modified residue" description="Phosphoserine; by host" evidence="3">
    <location>
        <position position="2466"/>
    </location>
</feature>
<feature type="lipid moiety-binding region" description="S-palmitoyl cysteine; by host" evidence="6">
    <location>
        <position position="923"/>
    </location>
</feature>
<feature type="lipid moiety-binding region" description="S-palmitoyl cysteine; by host" evidence="6">
    <location>
        <position position="1973"/>
    </location>
</feature>
<feature type="glycosylation site" description="N-linked (GlcNAc...) asparagine; by host" evidence="6">
    <location>
        <position position="196"/>
    </location>
</feature>
<feature type="glycosylation site" description="N-linked (GlcNAc...) asparagine; by host" evidence="6">
    <location>
        <position position="209"/>
    </location>
</feature>
<feature type="glycosylation site" description="N-linked (GlcNAc...) asparagine; by host" evidence="6">
    <location>
        <position position="234"/>
    </location>
</feature>
<feature type="glycosylation site" description="N-linked (GlcNAc...) asparagine; by host" evidence="14">
    <location>
        <position position="250"/>
    </location>
</feature>
<feature type="glycosylation site" description="N-linked (GlcNAc...) asparagine; by host" evidence="6">
    <location>
        <position position="305"/>
    </location>
</feature>
<feature type="glycosylation site" description="N-linked (GlcNAc...) (high mannose) asparagine; by host" evidence="6">
    <location>
        <position position="416"/>
    </location>
</feature>
<feature type="glycosylation site" description="N-linked (GlcNAc...) (high mannose) asparagine; by host" evidence="6">
    <location>
        <position position="422"/>
    </location>
</feature>
<feature type="glycosylation site" description="N-linked (GlcNAc...) (high mannose) asparagine; by host" evidence="6">
    <location>
        <position position="429"/>
    </location>
</feature>
<feature type="glycosylation site" description="N-linked (GlcNAc...) asparagine; by host" evidence="14">
    <location>
        <position position="447"/>
    </location>
</feature>
<feature type="glycosylation site" description="N-linked (GlcNAc...) asparagine; by host" evidence="14">
    <location>
        <position position="475"/>
    </location>
</feature>
<feature type="glycosylation site" description="N-linked (GlcNAc...) asparagine; by host" evidence="14">
    <location>
        <position position="532"/>
    </location>
</feature>
<feature type="glycosylation site" description="N-linked (GlcNAc...) asparagine; by host" evidence="14">
    <location>
        <position position="556"/>
    </location>
</feature>
<feature type="glycosylation site" description="N-linked (GlcNAc...) (high mannose) asparagine; by host" evidence="6">
    <location>
        <position position="624"/>
    </location>
</feature>
<feature type="glycosylation site" description="N-linked (GlcNAc...) (high mannose) asparagine; by host" evidence="6">
    <location>
        <position position="646"/>
    </location>
</feature>
<feature type="disulfide bond" evidence="6">
    <location>
        <begin position="428"/>
        <end position="552"/>
    </location>
</feature>
<feature type="disulfide bond" evidence="6">
    <location>
        <begin position="451"/>
        <end position="458"/>
    </location>
</feature>
<feature type="disulfide bond" evidence="6">
    <location>
        <begin position="486"/>
        <end position="494"/>
    </location>
</feature>
<feature type="disulfide bond" evidence="6">
    <location>
        <begin position="503"/>
        <end position="508"/>
    </location>
</feature>
<feature type="disulfide bond" evidence="6">
    <location>
        <begin position="564"/>
        <end position="569"/>
    </location>
</feature>
<feature type="disulfide bond" evidence="6">
    <location>
        <begin position="582"/>
        <end position="586"/>
    </location>
</feature>
<feature type="disulfide bond" evidence="6">
    <location>
        <begin position="598"/>
        <end position="621"/>
    </location>
</feature>
<feature type="disulfide bond" evidence="6">
    <location>
        <begin position="608"/>
        <end position="645"/>
    </location>
</feature>
<feature type="disulfide bond" evidence="6">
    <location>
        <begin position="653"/>
        <end position="678"/>
    </location>
</feature>
<feature type="cross-link" description="Glycyl lysine isopeptide (Lys-Gly) (interchain with G-Cter in ubiquitin)" evidence="6">
    <location>
        <position position="2352"/>
    </location>
</feature>